<organism>
    <name type="scientific">Thermus thermophilus (strain ATCC 27634 / DSM 579 / HB8)</name>
    <dbReference type="NCBI Taxonomy" id="300852"/>
    <lineage>
        <taxon>Bacteria</taxon>
        <taxon>Thermotogati</taxon>
        <taxon>Deinococcota</taxon>
        <taxon>Deinococci</taxon>
        <taxon>Thermales</taxon>
        <taxon>Thermaceae</taxon>
        <taxon>Thermus</taxon>
    </lineage>
</organism>
<comment type="function">
    <text>Located on the upper part of the platform of the 30S subunit, where it bridges several disparate RNA helices of the 16S rRNA. Forms part of the Shine-Dalgarno cleft in the 70S ribosome, where it interacts both with the Shine-Dalgarno helix and mRNA.</text>
</comment>
<comment type="subunit">
    <text>Part of the 30S ribosomal subunit. Interacts with proteins S7 and S18. Binds to the C-terminus of IF-3; however exactly how IF-3 interacts with the 30S subunit is unclear. May contact the C-terminus of Era.</text>
</comment>
<comment type="mass spectrometry" mass="13583.0" method="MALDI" evidence="2"/>
<comment type="similarity">
    <text evidence="4">Belongs to the universal ribosomal protein uS11 family.</text>
</comment>
<feature type="initiator methionine" description="Removed" evidence="3">
    <location>
        <position position="1"/>
    </location>
</feature>
<feature type="chain" id="PRO_0000123246" description="Small ribosomal subunit protein uS11">
    <location>
        <begin position="2"/>
        <end position="129"/>
    </location>
</feature>
<feature type="region of interest" description="Disordered" evidence="1">
    <location>
        <begin position="109"/>
        <end position="129"/>
    </location>
</feature>
<feature type="compositionally biased region" description="Basic residues" evidence="1">
    <location>
        <begin position="119"/>
        <end position="129"/>
    </location>
</feature>
<feature type="strand" evidence="7">
    <location>
        <begin position="15"/>
        <end position="23"/>
    </location>
</feature>
<feature type="strand" evidence="5">
    <location>
        <begin position="24"/>
        <end position="26"/>
    </location>
</feature>
<feature type="strand" evidence="7">
    <location>
        <begin position="28"/>
        <end position="33"/>
    </location>
</feature>
<feature type="strand" evidence="6">
    <location>
        <begin position="35"/>
        <end position="37"/>
    </location>
</feature>
<feature type="strand" evidence="7">
    <location>
        <begin position="39"/>
        <end position="42"/>
    </location>
</feature>
<feature type="turn" evidence="7">
    <location>
        <begin position="45"/>
        <end position="49"/>
    </location>
</feature>
<feature type="helix" evidence="7">
    <location>
        <begin position="53"/>
        <end position="56"/>
    </location>
</feature>
<feature type="helix" evidence="7">
    <location>
        <begin position="58"/>
        <end position="73"/>
    </location>
</feature>
<feature type="turn" evidence="7">
    <location>
        <begin position="74"/>
        <end position="76"/>
    </location>
</feature>
<feature type="strand" evidence="7">
    <location>
        <begin position="79"/>
        <end position="86"/>
    </location>
</feature>
<feature type="helix" evidence="7">
    <location>
        <begin position="91"/>
        <end position="99"/>
    </location>
</feature>
<feature type="strand" evidence="7">
    <location>
        <begin position="101"/>
        <end position="107"/>
    </location>
</feature>
<feature type="strand" evidence="8">
    <location>
        <begin position="108"/>
        <end position="110"/>
    </location>
</feature>
<feature type="helix" evidence="7">
    <location>
        <begin position="123"/>
        <end position="125"/>
    </location>
</feature>
<feature type="turn" evidence="6">
    <location>
        <begin position="126"/>
        <end position="128"/>
    </location>
</feature>
<sequence length="129" mass="13713">MAKKPSKKKVKRQVASGRAYIHASYNNTIVTITDPDGNPITWSSGGVIGYKGSRKGTPYAAQLAALDAAKKAMAYGMQSVDVIVRGTGAGREQAIRALQASGLQVKSIVDDTPVPHNGCRPKKKFRKAS</sequence>
<reference key="1">
    <citation type="journal article" date="1999" name="J. Biochem.">
        <title>Cloning of the RNA polymerase alpha subunit gene from Thermus thermophilus HB8 and characterization of the protein.</title>
        <authorList>
            <person name="Wada T."/>
            <person name="Yamazaki T."/>
            <person name="Kuramitsu S."/>
            <person name="Kyogoku Y."/>
        </authorList>
    </citation>
    <scope>NUCLEOTIDE SEQUENCE [GENOMIC DNA]</scope>
</reference>
<reference key="2">
    <citation type="submission" date="2004-11" db="EMBL/GenBank/DDBJ databases">
        <title>Complete genome sequence of Thermus thermophilus HB8.</title>
        <authorList>
            <person name="Masui R."/>
            <person name="Kurokawa K."/>
            <person name="Nakagawa N."/>
            <person name="Tokunaga F."/>
            <person name="Koyama Y."/>
            <person name="Shibata T."/>
            <person name="Oshima T."/>
            <person name="Yokoyama S."/>
            <person name="Yasunaga T."/>
            <person name="Kuramitsu S."/>
        </authorList>
    </citation>
    <scope>NUCLEOTIDE SEQUENCE [LARGE SCALE GENOMIC DNA]</scope>
    <source>
        <strain>ATCC 27634 / DSM 579 / HB8</strain>
    </source>
</reference>
<reference key="3">
    <citation type="journal article" date="1994" name="Eur. J. Biochem.">
        <title>Purification and characterization of the 30S ribosomal proteins from the bacterium Thermus thermophilus.</title>
        <authorList>
            <person name="Tsiboli P."/>
            <person name="Herfurth E."/>
            <person name="Choli T."/>
        </authorList>
    </citation>
    <scope>PROTEIN SEQUENCE OF 2-26</scope>
</reference>
<reference key="4">
    <citation type="journal article" date="2005" name="Proteomics">
        <title>Extending ribosomal protein identifications to unsequenced bacterial strains using matrix-assisted laser desorption/ionization mass spectrometry.</title>
        <authorList>
            <person name="Suh M.-J."/>
            <person name="Hamburg D.M."/>
            <person name="Gregory S.T."/>
            <person name="Dahlberg A.E."/>
            <person name="Limbach P.A."/>
        </authorList>
    </citation>
    <scope>MASS SPECTROMETRY</scope>
    <source>
        <strain>ATCC 27634 / DSM 579 / HB8</strain>
    </source>
</reference>
<reference key="5">
    <citation type="journal article" date="2000" name="Nature">
        <title>Structure of the 30S ribosomal subunit.</title>
        <authorList>
            <person name="Wimberly B.T."/>
            <person name="Brodersen D.E."/>
            <person name="Clemons W.M. Jr."/>
            <person name="Morgan-Warren R.J."/>
            <person name="Carter A.P."/>
            <person name="Vonrhein C."/>
            <person name="Hartsch T."/>
            <person name="Ramakrishnan V."/>
        </authorList>
    </citation>
    <scope>X-RAY CRYSTALLOGRAPHY (3.05 ANGSTROMS) OF THE 30S SUBUNIT</scope>
</reference>
<reference key="6">
    <citation type="journal article" date="2000" name="Cell">
        <title>Structure of functionally activated small ribosomal subunit at 3.3 A resolution.</title>
        <authorList>
            <person name="Schluenzen F."/>
            <person name="Tocilj A."/>
            <person name="Zarivach R."/>
            <person name="Harms J."/>
            <person name="Gluehmann M."/>
            <person name="Janell D."/>
            <person name="Bashan A."/>
            <person name="Bartels H."/>
            <person name="Agmon I."/>
            <person name="Franceschi F."/>
            <person name="Yonath A."/>
        </authorList>
    </citation>
    <scope>X-RAY CRYSTALLOGRAPHY (3.3 ANGSTROMS) OF THE 30S SUBUNIT</scope>
</reference>
<reference key="7">
    <citation type="journal article" date="2000" name="Cell">
        <title>The structural basis for the action of the antibiotics tetracycline, pactamycin, and hygromycin B on the 30S ribosomal subunit.</title>
        <authorList>
            <person name="Brodersen D.E."/>
            <person name="Clemons W.M. Jr."/>
            <person name="Carter A.P."/>
            <person name="Morgan-Warren R.J."/>
            <person name="Wimberly B.T."/>
            <person name="Ramakrishnan V."/>
        </authorList>
    </citation>
    <scope>X-RAY CRYSTALLOGRAPHY (3.3 ANGSTROMS) OF THE 30S SUBUNIT</scope>
</reference>
<reference key="8">
    <citation type="journal article" date="2000" name="Nature">
        <title>Functional insights from the structure of the 30S ribosomal subunit and its interactions with antibiotics.</title>
        <authorList>
            <person name="Carter A.P."/>
            <person name="Clemons W.M. Jr."/>
            <person name="Brodersen D.E."/>
            <person name="Morgan-Warren R.J."/>
            <person name="Wimberly B.T."/>
            <person name="Ramakrishnan V."/>
        </authorList>
    </citation>
    <scope>X-RAY CRYSTALLOGRAPHY (3.0 ANGSTROMS) OF THE 30S SUBUNIT</scope>
</reference>
<reference key="9">
    <citation type="journal article" date="2001" name="Cell">
        <title>The path of messenger RNA through the ribosome.</title>
        <authorList>
            <person name="Yusupova G.Z."/>
            <person name="Yusupov M.M."/>
            <person name="Cate J.H.D."/>
            <person name="Noller H.F."/>
        </authorList>
    </citation>
    <scope>X-RAY CRYSTALLOGRAPHY (5.0 ANGSTROMS) OF THE RIBOSOME</scope>
</reference>
<reference key="10">
    <citation type="journal article" date="2001" name="EMBO J.">
        <title>Crystal structures of complexes of the small ribosomal subunit with tetracycline, edeine and IF3.</title>
        <authorList>
            <person name="Pioletti M."/>
            <person name="Schluenzen F."/>
            <person name="Harms J."/>
            <person name="Zarivach R."/>
            <person name="Gluehmann M."/>
            <person name="Avila H."/>
            <person name="Bashan A."/>
            <person name="Bartels H."/>
            <person name="Auerbach T."/>
            <person name="Jacobi C."/>
            <person name="Hartsch T."/>
            <person name="Yonath A."/>
            <person name="Franceschi F."/>
        </authorList>
    </citation>
    <scope>X-RAY CRYSTALLOGRAPHY (3.2 ANGSTROMS) OF THE 30S SUBUNIT</scope>
</reference>
<reference key="11">
    <citation type="journal article" date="2001" name="Science">
        <title>Crystal structure of an initiation factor bound to the 30S ribosomal subunit.</title>
        <authorList>
            <person name="Carter A.P."/>
            <person name="Clemons W.M. Jr."/>
            <person name="Brodersen D.E."/>
            <person name="Morgan-Warren R.J."/>
            <person name="Hartsch T."/>
            <person name="Wimberly B.T."/>
            <person name="Ramakrishnan V."/>
        </authorList>
    </citation>
    <scope>X-RAY CRYSTALLOGRAPHY (3.2 ANGSTROMS) OF THE 30S SUBUNIT</scope>
</reference>
<reference key="12">
    <citation type="journal article" date="2001" name="Science">
        <title>Crystal structure of the ribosome at 5.5 A resolution.</title>
        <authorList>
            <person name="Yusupov M.M."/>
            <person name="Yusupova G.Z."/>
            <person name="Baucom A."/>
            <person name="Lieberman K."/>
            <person name="Earnest T.N."/>
            <person name="Cate J.H.D."/>
            <person name="Noller H.F."/>
        </authorList>
    </citation>
    <scope>X-RAY CRYSTALLOGRAPHY (5.5 ANGSTROMS) OF THE RIBOSOME</scope>
</reference>
<reference key="13">
    <citation type="journal article" date="2001" name="Science">
        <title>Recognition of cognate transfer RNA by the 30S ribosomal subunit.</title>
        <authorList>
            <person name="Ogle J.M."/>
            <person name="Brodersen D.E."/>
            <person name="Clemons W.M. Jr."/>
            <person name="Tarry M.J."/>
            <person name="Carter A.P."/>
            <person name="Ramakrishnan V."/>
        </authorList>
    </citation>
    <scope>X-RAY CRYSTALLOGRAPHY (3.11 ANGSTROMS) OF THE 30S SUBUNIT</scope>
</reference>
<reference key="14">
    <citation type="journal article" date="2002" name="J. Mol. Biol.">
        <title>Crystal structure of the 30S ribosomal subunit from Thermus thermophilus: structure of the proteins and their interactions with 16S RNA.</title>
        <authorList>
            <person name="Brodersen D.E."/>
            <person name="Clemons W.M. Jr."/>
            <person name="Carter A.P."/>
            <person name="Wimberly B.T."/>
            <person name="Ramakrishnan V."/>
        </authorList>
    </citation>
    <scope>X-RAY CRYSTALLOGRAPHY (3.05 ANGSTROMS) OF THE 30S SUBUNIT</scope>
</reference>
<reference key="15">
    <citation type="journal article" date="2005" name="Mol. Cell">
        <title>Interaction of Era with the 30S ribosomal subunit implications for 30S subunit assembly.</title>
        <authorList>
            <person name="Sharma M.R."/>
            <person name="Barat C."/>
            <person name="Wilson D.N."/>
            <person name="Booth T.M."/>
            <person name="Kawazoe M."/>
            <person name="Hori-Takemoto C."/>
            <person name="Shirouzu M."/>
            <person name="Yokoyama S."/>
            <person name="Fucini P."/>
            <person name="Agrawal R.K."/>
        </authorList>
    </citation>
    <scope>STRUCTURE BY ELECTRON MICROSCOPY (13.50 ANGSTROMS)</scope>
    <scope>POSSIBLE INTERACTION WITH ERA</scope>
</reference>
<reference key="16">
    <citation type="journal article" date="2005" name="Cell">
        <title>Crystal structures of the ribosome in complex with release factors RF1 and RF2 bound to a cognate stop codon.</title>
        <authorList>
            <person name="Petry S."/>
            <person name="Brodersen D.E."/>
            <person name="Murphy F.V."/>
            <person name="Dunham C.M."/>
            <person name="Selmer M."/>
            <person name="Tarry M.J."/>
            <person name="Kelley A.C."/>
            <person name="Ramakrishnan V."/>
        </authorList>
    </citation>
    <scope>X-RAY CRYSTALLOGRAPHY (5.90 ANGSTROMS) OF 70S RIBOSOME IN COMPLEX WITH RF1 OR RF2</scope>
    <scope>SUBUNIT</scope>
</reference>
<reference key="17">
    <citation type="journal article" date="2008" name="Science">
        <title>Insights into translational termination from the structure of RF2 bound to the ribosome.</title>
        <authorList>
            <person name="Weixlbaumer A."/>
            <person name="Jin H."/>
            <person name="Neubauer C."/>
            <person name="Voorhees R.M."/>
            <person name="Petry S."/>
            <person name="Kelley A.C."/>
            <person name="Ramakrishnan V."/>
        </authorList>
    </citation>
    <scope>X-RAY CRYSTALLOGRAPHY (3.45 ANGSTROMS) OF 70S RIBOSOME IN COMPLEX WITH RF2</scope>
    <scope>SUBUNIT</scope>
</reference>
<reference key="18">
    <citation type="journal article" date="2010" name="Proc. Natl. Acad. Sci. U.S.A.">
        <title>Structure of the 70S ribosome bound to release factor 2 and a substrate analog provides insights into catalysis of peptide release.</title>
        <authorList>
            <person name="Jin H."/>
            <person name="Kelley A.C."/>
            <person name="Loakes D."/>
            <person name="Ramakrishnan V."/>
        </authorList>
    </citation>
    <scope>X-RAY CRYSTALLOGRAPHY (3.10 ANGSTROMS) OF 70S RIBOSOME IN COMPLEX WITH RF2</scope>
    <scope>SUBUNIT</scope>
</reference>
<dbReference type="EMBL" id="AB024328">
    <property type="protein sequence ID" value="BAA75547.1"/>
    <property type="molecule type" value="Genomic_DNA"/>
</dbReference>
<dbReference type="EMBL" id="AP008226">
    <property type="protein sequence ID" value="BAD71489.1"/>
    <property type="molecule type" value="Genomic_DNA"/>
</dbReference>
<dbReference type="RefSeq" id="WP_008633365.1">
    <property type="nucleotide sequence ID" value="NC_006461.1"/>
</dbReference>
<dbReference type="RefSeq" id="YP_144932.1">
    <property type="nucleotide sequence ID" value="NC_006461.1"/>
</dbReference>
<dbReference type="PDB" id="1FJG">
    <property type="method" value="X-ray"/>
    <property type="resolution" value="3.00 A"/>
    <property type="chains" value="K=1-129"/>
</dbReference>
<dbReference type="PDB" id="1HNW">
    <property type="method" value="X-ray"/>
    <property type="resolution" value="3.40 A"/>
    <property type="chains" value="K=1-129"/>
</dbReference>
<dbReference type="PDB" id="1HNX">
    <property type="method" value="X-ray"/>
    <property type="resolution" value="3.40 A"/>
    <property type="chains" value="K=1-129"/>
</dbReference>
<dbReference type="PDB" id="1HNZ">
    <property type="method" value="X-ray"/>
    <property type="resolution" value="3.30 A"/>
    <property type="chains" value="K=1-129"/>
</dbReference>
<dbReference type="PDB" id="1HR0">
    <property type="method" value="X-ray"/>
    <property type="resolution" value="3.20 A"/>
    <property type="chains" value="K=1-129"/>
</dbReference>
<dbReference type="PDB" id="1I94">
    <property type="method" value="X-ray"/>
    <property type="resolution" value="3.20 A"/>
    <property type="chains" value="K=2-129"/>
</dbReference>
<dbReference type="PDB" id="1I95">
    <property type="method" value="X-ray"/>
    <property type="resolution" value="4.50 A"/>
    <property type="chains" value="K=2-129"/>
</dbReference>
<dbReference type="PDB" id="1I96">
    <property type="method" value="X-ray"/>
    <property type="resolution" value="4.20 A"/>
    <property type="chains" value="K=2-129"/>
</dbReference>
<dbReference type="PDB" id="1I97">
    <property type="method" value="X-ray"/>
    <property type="resolution" value="4.50 A"/>
    <property type="chains" value="K=2-129"/>
</dbReference>
<dbReference type="PDB" id="1IBK">
    <property type="method" value="X-ray"/>
    <property type="resolution" value="3.31 A"/>
    <property type="chains" value="K=1-129"/>
</dbReference>
<dbReference type="PDB" id="1IBL">
    <property type="method" value="X-ray"/>
    <property type="resolution" value="3.11 A"/>
    <property type="chains" value="K=1-129"/>
</dbReference>
<dbReference type="PDB" id="1IBM">
    <property type="method" value="X-ray"/>
    <property type="resolution" value="3.31 A"/>
    <property type="chains" value="K=1-129"/>
</dbReference>
<dbReference type="PDB" id="1J5E">
    <property type="method" value="X-ray"/>
    <property type="resolution" value="3.05 A"/>
    <property type="chains" value="K=1-129"/>
</dbReference>
<dbReference type="PDB" id="1JGO">
    <property type="method" value="X-ray"/>
    <property type="resolution" value="5.60 A"/>
    <property type="chains" value="N=1-129"/>
</dbReference>
<dbReference type="PDB" id="1JGP">
    <property type="method" value="X-ray"/>
    <property type="resolution" value="7.00 A"/>
    <property type="chains" value="N=1-129"/>
</dbReference>
<dbReference type="PDB" id="1JGQ">
    <property type="method" value="X-ray"/>
    <property type="resolution" value="5.00 A"/>
    <property type="chains" value="N=1-129"/>
</dbReference>
<dbReference type="PDB" id="1ML5">
    <property type="method" value="EM"/>
    <property type="resolution" value="14.00 A"/>
    <property type="chains" value="N=1-129"/>
</dbReference>
<dbReference type="PDB" id="1N32">
    <property type="method" value="X-ray"/>
    <property type="resolution" value="3.00 A"/>
    <property type="chains" value="K=1-129"/>
</dbReference>
<dbReference type="PDB" id="1N33">
    <property type="method" value="X-ray"/>
    <property type="resolution" value="3.35 A"/>
    <property type="chains" value="K=1-129"/>
</dbReference>
<dbReference type="PDB" id="1N34">
    <property type="method" value="X-ray"/>
    <property type="resolution" value="3.80 A"/>
    <property type="chains" value="K=1-129"/>
</dbReference>
<dbReference type="PDB" id="1N36">
    <property type="method" value="X-ray"/>
    <property type="resolution" value="3.65 A"/>
    <property type="chains" value="K=1-129"/>
</dbReference>
<dbReference type="PDB" id="1VVJ">
    <property type="method" value="X-ray"/>
    <property type="resolution" value="3.44 A"/>
    <property type="chains" value="QK/XK=1-129"/>
</dbReference>
<dbReference type="PDB" id="1VY4">
    <property type="method" value="X-ray"/>
    <property type="resolution" value="2.60 A"/>
    <property type="chains" value="AK/CK=1-129"/>
</dbReference>
<dbReference type="PDB" id="1VY5">
    <property type="method" value="X-ray"/>
    <property type="resolution" value="2.55 A"/>
    <property type="chains" value="AK/CK=1-129"/>
</dbReference>
<dbReference type="PDB" id="1VY6">
    <property type="method" value="X-ray"/>
    <property type="resolution" value="2.90 A"/>
    <property type="chains" value="AK/CK=1-129"/>
</dbReference>
<dbReference type="PDB" id="1VY7">
    <property type="method" value="X-ray"/>
    <property type="resolution" value="2.80 A"/>
    <property type="chains" value="AK/CK=1-129"/>
</dbReference>
<dbReference type="PDB" id="1X18">
    <property type="method" value="EM"/>
    <property type="resolution" value="13.50 A"/>
    <property type="chains" value="G=11-129"/>
</dbReference>
<dbReference type="PDB" id="1XMO">
    <property type="method" value="X-ray"/>
    <property type="resolution" value="3.25 A"/>
    <property type="chains" value="K=1-129"/>
</dbReference>
<dbReference type="PDB" id="1XMQ">
    <property type="method" value="X-ray"/>
    <property type="resolution" value="3.00 A"/>
    <property type="chains" value="K=1-129"/>
</dbReference>
<dbReference type="PDB" id="1XNQ">
    <property type="method" value="X-ray"/>
    <property type="resolution" value="3.05 A"/>
    <property type="chains" value="K=1-129"/>
</dbReference>
<dbReference type="PDB" id="1XNR">
    <property type="method" value="X-ray"/>
    <property type="resolution" value="3.10 A"/>
    <property type="chains" value="K=1-129"/>
</dbReference>
<dbReference type="PDB" id="2E5L">
    <property type="method" value="X-ray"/>
    <property type="resolution" value="3.30 A"/>
    <property type="chains" value="K=2-129"/>
</dbReference>
<dbReference type="PDB" id="2F4V">
    <property type="method" value="X-ray"/>
    <property type="resolution" value="3.80 A"/>
    <property type="chains" value="K=1-129"/>
</dbReference>
<dbReference type="PDB" id="2HHH">
    <property type="method" value="X-ray"/>
    <property type="resolution" value="3.35 A"/>
    <property type="chains" value="K=1-129"/>
</dbReference>
<dbReference type="PDB" id="2UU9">
    <property type="method" value="X-ray"/>
    <property type="resolution" value="3.10 A"/>
    <property type="chains" value="K=2-129"/>
</dbReference>
<dbReference type="PDB" id="2UUA">
    <property type="method" value="X-ray"/>
    <property type="resolution" value="2.90 A"/>
    <property type="chains" value="K=2-129"/>
</dbReference>
<dbReference type="PDB" id="2UUB">
    <property type="method" value="X-ray"/>
    <property type="resolution" value="2.90 A"/>
    <property type="chains" value="K=2-129"/>
</dbReference>
<dbReference type="PDB" id="2UUC">
    <property type="method" value="X-ray"/>
    <property type="resolution" value="3.10 A"/>
    <property type="chains" value="K=2-129"/>
</dbReference>
<dbReference type="PDB" id="2UXB">
    <property type="method" value="X-ray"/>
    <property type="resolution" value="3.10 A"/>
    <property type="chains" value="K=2-129"/>
</dbReference>
<dbReference type="PDB" id="2UXC">
    <property type="method" value="X-ray"/>
    <property type="resolution" value="2.90 A"/>
    <property type="chains" value="K=2-129"/>
</dbReference>
<dbReference type="PDB" id="2UXD">
    <property type="method" value="X-ray"/>
    <property type="resolution" value="3.20 A"/>
    <property type="chains" value="K=2-129"/>
</dbReference>
<dbReference type="PDB" id="2VQE">
    <property type="method" value="X-ray"/>
    <property type="resolution" value="2.50 A"/>
    <property type="chains" value="K=1-129"/>
</dbReference>
<dbReference type="PDB" id="2VQF">
    <property type="method" value="X-ray"/>
    <property type="resolution" value="2.90 A"/>
    <property type="chains" value="K=1-129"/>
</dbReference>
<dbReference type="PDB" id="2ZM6">
    <property type="method" value="X-ray"/>
    <property type="resolution" value="3.30 A"/>
    <property type="chains" value="K=2-129"/>
</dbReference>
<dbReference type="PDB" id="3OTO">
    <property type="method" value="X-ray"/>
    <property type="resolution" value="3.69 A"/>
    <property type="chains" value="K=1-129"/>
</dbReference>
<dbReference type="PDB" id="3T1H">
    <property type="method" value="X-ray"/>
    <property type="resolution" value="3.11 A"/>
    <property type="chains" value="K=1-129"/>
</dbReference>
<dbReference type="PDB" id="3T1Y">
    <property type="method" value="X-ray"/>
    <property type="resolution" value="2.80 A"/>
    <property type="chains" value="K=1-129"/>
</dbReference>
<dbReference type="PDB" id="4AQY">
    <property type="method" value="X-ray"/>
    <property type="resolution" value="3.50 A"/>
    <property type="chains" value="K=1-129"/>
</dbReference>
<dbReference type="PDB" id="4B3M">
    <property type="method" value="X-ray"/>
    <property type="resolution" value="2.90 A"/>
    <property type="chains" value="K=1-129"/>
</dbReference>
<dbReference type="PDB" id="4B3R">
    <property type="method" value="X-ray"/>
    <property type="resolution" value="3.00 A"/>
    <property type="chains" value="K=1-129"/>
</dbReference>
<dbReference type="PDB" id="4B3S">
    <property type="method" value="X-ray"/>
    <property type="resolution" value="3.15 A"/>
    <property type="chains" value="K=1-129"/>
</dbReference>
<dbReference type="PDB" id="4B3T">
    <property type="method" value="X-ray"/>
    <property type="resolution" value="3.00 A"/>
    <property type="chains" value="K=1-129"/>
</dbReference>
<dbReference type="PDB" id="4DR1">
    <property type="method" value="X-ray"/>
    <property type="resolution" value="3.60 A"/>
    <property type="chains" value="K=1-129"/>
</dbReference>
<dbReference type="PDB" id="4DR2">
    <property type="method" value="X-ray"/>
    <property type="resolution" value="3.25 A"/>
    <property type="chains" value="K=1-129"/>
</dbReference>
<dbReference type="PDB" id="4DR3">
    <property type="method" value="X-ray"/>
    <property type="resolution" value="3.35 A"/>
    <property type="chains" value="K=1-129"/>
</dbReference>
<dbReference type="PDB" id="4DR4">
    <property type="method" value="X-ray"/>
    <property type="resolution" value="3.97 A"/>
    <property type="chains" value="K=1-129"/>
</dbReference>
<dbReference type="PDB" id="4DR5">
    <property type="method" value="X-ray"/>
    <property type="resolution" value="3.45 A"/>
    <property type="chains" value="K=1-129"/>
</dbReference>
<dbReference type="PDB" id="4DR6">
    <property type="method" value="X-ray"/>
    <property type="resolution" value="3.30 A"/>
    <property type="chains" value="K=1-129"/>
</dbReference>
<dbReference type="PDB" id="4DR7">
    <property type="method" value="X-ray"/>
    <property type="resolution" value="3.75 A"/>
    <property type="chains" value="K=1-129"/>
</dbReference>
<dbReference type="PDB" id="4DUY">
    <property type="method" value="X-ray"/>
    <property type="resolution" value="3.39 A"/>
    <property type="chains" value="K=1-129"/>
</dbReference>
<dbReference type="PDB" id="4DUZ">
    <property type="method" value="X-ray"/>
    <property type="resolution" value="3.65 A"/>
    <property type="chains" value="K=1-129"/>
</dbReference>
<dbReference type="PDB" id="4DV0">
    <property type="method" value="X-ray"/>
    <property type="resolution" value="3.85 A"/>
    <property type="chains" value="K=1-129"/>
</dbReference>
<dbReference type="PDB" id="4DV1">
    <property type="method" value="X-ray"/>
    <property type="resolution" value="3.85 A"/>
    <property type="chains" value="K=1-129"/>
</dbReference>
<dbReference type="PDB" id="4DV2">
    <property type="method" value="X-ray"/>
    <property type="resolution" value="3.65 A"/>
    <property type="chains" value="K=1-129"/>
</dbReference>
<dbReference type="PDB" id="4DV3">
    <property type="method" value="X-ray"/>
    <property type="resolution" value="3.55 A"/>
    <property type="chains" value="K=1-129"/>
</dbReference>
<dbReference type="PDB" id="4DV4">
    <property type="method" value="X-ray"/>
    <property type="resolution" value="3.65 A"/>
    <property type="chains" value="K=1-129"/>
</dbReference>
<dbReference type="PDB" id="4DV5">
    <property type="method" value="X-ray"/>
    <property type="resolution" value="3.68 A"/>
    <property type="chains" value="K=1-129"/>
</dbReference>
<dbReference type="PDB" id="4DV6">
    <property type="method" value="X-ray"/>
    <property type="resolution" value="3.30 A"/>
    <property type="chains" value="K=1-129"/>
</dbReference>
<dbReference type="PDB" id="4DV7">
    <property type="method" value="X-ray"/>
    <property type="resolution" value="3.29 A"/>
    <property type="chains" value="K=1-129"/>
</dbReference>
<dbReference type="PDB" id="4GKJ">
    <property type="method" value="X-ray"/>
    <property type="resolution" value="3.30 A"/>
    <property type="chains" value="K=11-129"/>
</dbReference>
<dbReference type="PDB" id="4GKK">
    <property type="method" value="X-ray"/>
    <property type="resolution" value="3.20 A"/>
    <property type="chains" value="K=11-129"/>
</dbReference>
<dbReference type="PDB" id="4JI0">
    <property type="method" value="X-ray"/>
    <property type="resolution" value="3.49 A"/>
    <property type="chains" value="K=1-129"/>
</dbReference>
<dbReference type="PDB" id="4JI1">
    <property type="method" value="X-ray"/>
    <property type="resolution" value="3.14 A"/>
    <property type="chains" value="K=1-129"/>
</dbReference>
<dbReference type="PDB" id="4JI2">
    <property type="method" value="X-ray"/>
    <property type="resolution" value="3.64 A"/>
    <property type="chains" value="K=1-129"/>
</dbReference>
<dbReference type="PDB" id="4JI3">
    <property type="method" value="X-ray"/>
    <property type="resolution" value="3.35 A"/>
    <property type="chains" value="K=1-129"/>
</dbReference>
<dbReference type="PDB" id="4JI4">
    <property type="method" value="X-ray"/>
    <property type="resolution" value="3.69 A"/>
    <property type="chains" value="K=1-129"/>
</dbReference>
<dbReference type="PDB" id="4JI5">
    <property type="method" value="X-ray"/>
    <property type="resolution" value="3.85 A"/>
    <property type="chains" value="K=1-129"/>
</dbReference>
<dbReference type="PDB" id="4JI6">
    <property type="method" value="X-ray"/>
    <property type="resolution" value="3.55 A"/>
    <property type="chains" value="K=1-129"/>
</dbReference>
<dbReference type="PDB" id="4JI7">
    <property type="method" value="X-ray"/>
    <property type="resolution" value="3.50 A"/>
    <property type="chains" value="K=1-129"/>
</dbReference>
<dbReference type="PDB" id="4JI8">
    <property type="method" value="X-ray"/>
    <property type="resolution" value="3.74 A"/>
    <property type="chains" value="K=1-129"/>
</dbReference>
<dbReference type="PDB" id="4JV5">
    <property type="method" value="X-ray"/>
    <property type="resolution" value="3.16 A"/>
    <property type="chains" value="K=11-129"/>
</dbReference>
<dbReference type="PDB" id="4JYA">
    <property type="method" value="X-ray"/>
    <property type="resolution" value="3.10 A"/>
    <property type="chains" value="K=11-129"/>
</dbReference>
<dbReference type="PDB" id="4K0K">
    <property type="method" value="X-ray"/>
    <property type="resolution" value="3.40 A"/>
    <property type="chains" value="K=11-129"/>
</dbReference>
<dbReference type="PDB" id="4KHP">
    <property type="method" value="X-ray"/>
    <property type="resolution" value="3.10 A"/>
    <property type="chains" value="K=11-129"/>
</dbReference>
<dbReference type="PDB" id="4L47">
    <property type="method" value="X-ray"/>
    <property type="resolution" value="3.22 A"/>
    <property type="chains" value="QK/XK=1-129"/>
</dbReference>
<dbReference type="PDB" id="4L71">
    <property type="method" value="X-ray"/>
    <property type="resolution" value="3.90 A"/>
    <property type="chains" value="QK/XK=1-129"/>
</dbReference>
<dbReference type="PDB" id="4LEL">
    <property type="method" value="X-ray"/>
    <property type="resolution" value="3.90 A"/>
    <property type="chains" value="QK/XK=1-129"/>
</dbReference>
<dbReference type="PDB" id="4LF4">
    <property type="method" value="X-ray"/>
    <property type="resolution" value="3.34 A"/>
    <property type="chains" value="K=1-129"/>
</dbReference>
<dbReference type="PDB" id="4LF5">
    <property type="method" value="X-ray"/>
    <property type="resolution" value="3.75 A"/>
    <property type="chains" value="K=1-129"/>
</dbReference>
<dbReference type="PDB" id="4LF6">
    <property type="method" value="X-ray"/>
    <property type="resolution" value="3.31 A"/>
    <property type="chains" value="K=1-129"/>
</dbReference>
<dbReference type="PDB" id="4LF7">
    <property type="method" value="X-ray"/>
    <property type="resolution" value="3.15 A"/>
    <property type="chains" value="K=1-129"/>
</dbReference>
<dbReference type="PDB" id="4LF8">
    <property type="method" value="X-ray"/>
    <property type="resolution" value="3.15 A"/>
    <property type="chains" value="K=1-129"/>
</dbReference>
<dbReference type="PDB" id="4LF9">
    <property type="method" value="X-ray"/>
    <property type="resolution" value="3.28 A"/>
    <property type="chains" value="K=1-129"/>
</dbReference>
<dbReference type="PDB" id="4LFA">
    <property type="method" value="X-ray"/>
    <property type="resolution" value="3.65 A"/>
    <property type="chains" value="K=1-129"/>
</dbReference>
<dbReference type="PDB" id="4LFB">
    <property type="method" value="X-ray"/>
    <property type="resolution" value="3.01 A"/>
    <property type="chains" value="K=1-129"/>
</dbReference>
<dbReference type="PDB" id="4LFC">
    <property type="method" value="X-ray"/>
    <property type="resolution" value="3.60 A"/>
    <property type="chains" value="K=1-129"/>
</dbReference>
<dbReference type="PDB" id="4LFZ">
    <property type="method" value="X-ray"/>
    <property type="resolution" value="3.92 A"/>
    <property type="chains" value="QK/XK=1-129"/>
</dbReference>
<dbReference type="PDB" id="4LNT">
    <property type="method" value="X-ray"/>
    <property type="resolution" value="2.94 A"/>
    <property type="chains" value="QK/XK=1-129"/>
</dbReference>
<dbReference type="PDB" id="4LSK">
    <property type="method" value="X-ray"/>
    <property type="resolution" value="3.48 A"/>
    <property type="chains" value="QK/XK=1-129"/>
</dbReference>
<dbReference type="PDB" id="4LT8">
    <property type="method" value="X-ray"/>
    <property type="resolution" value="3.14 A"/>
    <property type="chains" value="QK/XK=1-129"/>
</dbReference>
<dbReference type="PDB" id="4NXM">
    <property type="method" value="X-ray"/>
    <property type="resolution" value="3.65 A"/>
    <property type="chains" value="K=1-129"/>
</dbReference>
<dbReference type="PDB" id="4NXN">
    <property type="method" value="X-ray"/>
    <property type="resolution" value="3.54 A"/>
    <property type="chains" value="K=1-129"/>
</dbReference>
<dbReference type="PDB" id="4OX9">
    <property type="method" value="X-ray"/>
    <property type="resolution" value="3.80 A"/>
    <property type="chains" value="K=1-129"/>
</dbReference>
<dbReference type="PDB" id="4P6F">
    <property type="method" value="X-ray"/>
    <property type="resolution" value="3.60 A"/>
    <property type="chains" value="QK/XK=1-129"/>
</dbReference>
<dbReference type="PDB" id="4P70">
    <property type="method" value="X-ray"/>
    <property type="resolution" value="3.68 A"/>
    <property type="chains" value="QK/XK=1-129"/>
</dbReference>
<dbReference type="PDB" id="4TUA">
    <property type="method" value="X-ray"/>
    <property type="resolution" value="3.60 A"/>
    <property type="chains" value="QK/XK=1-129"/>
</dbReference>
<dbReference type="PDB" id="4TUB">
    <property type="method" value="X-ray"/>
    <property type="resolution" value="3.60 A"/>
    <property type="chains" value="QK/XK=1-129"/>
</dbReference>
<dbReference type="PDB" id="4TUC">
    <property type="method" value="X-ray"/>
    <property type="resolution" value="3.60 A"/>
    <property type="chains" value="QK/XK=1-129"/>
</dbReference>
<dbReference type="PDB" id="4TUD">
    <property type="method" value="X-ray"/>
    <property type="resolution" value="3.60 A"/>
    <property type="chains" value="QK/XK=1-129"/>
</dbReference>
<dbReference type="PDB" id="4TUE">
    <property type="method" value="X-ray"/>
    <property type="resolution" value="3.50 A"/>
    <property type="chains" value="QK/XK=1-129"/>
</dbReference>
<dbReference type="PDB" id="4V42">
    <property type="method" value="X-ray"/>
    <property type="resolution" value="5.50 A"/>
    <property type="chains" value="AN=1-129"/>
</dbReference>
<dbReference type="PDB" id="4V49">
    <property type="method" value="X-ray"/>
    <property type="resolution" value="8.70 A"/>
    <property type="chains" value="K=11-129"/>
</dbReference>
<dbReference type="PDB" id="4V4A">
    <property type="method" value="X-ray"/>
    <property type="resolution" value="9.50 A"/>
    <property type="chains" value="K=11-129"/>
</dbReference>
<dbReference type="PDB" id="4V4I">
    <property type="method" value="X-ray"/>
    <property type="resolution" value="3.71 A"/>
    <property type="chains" value="l=-"/>
</dbReference>
<dbReference type="PDB" id="4V4P">
    <property type="method" value="X-ray"/>
    <property type="resolution" value="5.50 A"/>
    <property type="chains" value="BN=1-129"/>
</dbReference>
<dbReference type="PDB" id="4V4R">
    <property type="method" value="X-ray"/>
    <property type="resolution" value="5.90 A"/>
    <property type="chains" value="AK=1-129"/>
</dbReference>
<dbReference type="PDB" id="4V4S">
    <property type="method" value="X-ray"/>
    <property type="resolution" value="6.76 A"/>
    <property type="chains" value="AK=1-129"/>
</dbReference>
<dbReference type="PDB" id="4V4T">
    <property type="method" value="X-ray"/>
    <property type="resolution" value="6.46 A"/>
    <property type="chains" value="AK=1-129"/>
</dbReference>
<dbReference type="PDB" id="4V4X">
    <property type="method" value="X-ray"/>
    <property type="resolution" value="5.00 A"/>
    <property type="chains" value="AN=1-129"/>
</dbReference>
<dbReference type="PDB" id="4V4Y">
    <property type="method" value="X-ray"/>
    <property type="resolution" value="5.50 A"/>
    <property type="chains" value="AN=1-129"/>
</dbReference>
<dbReference type="PDB" id="4V4Z">
    <property type="method" value="X-ray"/>
    <property type="resolution" value="4.51 A"/>
    <property type="chains" value="AN=1-129"/>
</dbReference>
<dbReference type="PDB" id="4V51">
    <property type="method" value="X-ray"/>
    <property type="resolution" value="2.80 A"/>
    <property type="chains" value="AK/CK=2-129"/>
</dbReference>
<dbReference type="PDB" id="4V5A">
    <property type="method" value="X-ray"/>
    <property type="resolution" value="3.50 A"/>
    <property type="chains" value="AK/CK=2-129"/>
</dbReference>
<dbReference type="PDB" id="4V5C">
    <property type="method" value="X-ray"/>
    <property type="resolution" value="3.30 A"/>
    <property type="chains" value="AK/CK=1-129"/>
</dbReference>
<dbReference type="PDB" id="4V5D">
    <property type="method" value="X-ray"/>
    <property type="resolution" value="3.50 A"/>
    <property type="chains" value="AK/CK=1-129"/>
</dbReference>
<dbReference type="PDB" id="4V5E">
    <property type="method" value="X-ray"/>
    <property type="resolution" value="3.45 A"/>
    <property type="chains" value="AK/CK=1-129"/>
</dbReference>
<dbReference type="PDB" id="4V5F">
    <property type="method" value="X-ray"/>
    <property type="resolution" value="3.60 A"/>
    <property type="chains" value="AK/CK=1-129"/>
</dbReference>
<dbReference type="PDB" id="4V5G">
    <property type="method" value="X-ray"/>
    <property type="resolution" value="3.60 A"/>
    <property type="chains" value="AK/CK=1-129"/>
</dbReference>
<dbReference type="PDB" id="4V5J">
    <property type="method" value="X-ray"/>
    <property type="resolution" value="3.10 A"/>
    <property type="chains" value="AK/CK=1-129"/>
</dbReference>
<dbReference type="PDB" id="4V5K">
    <property type="method" value="X-ray"/>
    <property type="resolution" value="3.20 A"/>
    <property type="chains" value="AK/CK=1-129"/>
</dbReference>
<dbReference type="PDB" id="4V5L">
    <property type="method" value="X-ray"/>
    <property type="resolution" value="3.10 A"/>
    <property type="chains" value="AK=1-129"/>
</dbReference>
<dbReference type="PDB" id="4V5M">
    <property type="method" value="EM"/>
    <property type="resolution" value="7.80 A"/>
    <property type="chains" value="AK=1-129"/>
</dbReference>
<dbReference type="PDB" id="4V5N">
    <property type="method" value="EM"/>
    <property type="resolution" value="7.60 A"/>
    <property type="chains" value="AK=1-129"/>
</dbReference>
<dbReference type="PDB" id="4V5P">
    <property type="method" value="X-ray"/>
    <property type="resolution" value="3.10 A"/>
    <property type="chains" value="AK/CK=1-129"/>
</dbReference>
<dbReference type="PDB" id="4V5Q">
    <property type="method" value="X-ray"/>
    <property type="resolution" value="3.10 A"/>
    <property type="chains" value="AK/CK=1-129"/>
</dbReference>
<dbReference type="PDB" id="4V5R">
    <property type="method" value="X-ray"/>
    <property type="resolution" value="3.10 A"/>
    <property type="chains" value="AK/CK=1-129"/>
</dbReference>
<dbReference type="PDB" id="4V5S">
    <property type="method" value="X-ray"/>
    <property type="resolution" value="3.10 A"/>
    <property type="chains" value="AK/CK=1-129"/>
</dbReference>
<dbReference type="PDB" id="4V68">
    <property type="method" value="EM"/>
    <property type="resolution" value="6.40 A"/>
    <property type="chains" value="AK=11-129"/>
</dbReference>
<dbReference type="PDB" id="4V6A">
    <property type="method" value="X-ray"/>
    <property type="resolution" value="3.10 A"/>
    <property type="chains" value="AK/CK=1-129"/>
</dbReference>
<dbReference type="PDB" id="4V6F">
    <property type="method" value="X-ray"/>
    <property type="resolution" value="3.10 A"/>
    <property type="chains" value="BN/CN=1-129"/>
</dbReference>
<dbReference type="PDB" id="4V6G">
    <property type="method" value="X-ray"/>
    <property type="resolution" value="3.50 A"/>
    <property type="chains" value="AN/CN=1-129"/>
</dbReference>
<dbReference type="PDB" id="4V7J">
    <property type="method" value="X-ray"/>
    <property type="resolution" value="3.30 A"/>
    <property type="chains" value="Ak/Bk=1-129"/>
</dbReference>
<dbReference type="PDB" id="4V7K">
    <property type="method" value="X-ray"/>
    <property type="resolution" value="3.60 A"/>
    <property type="chains" value="Ak/Bk=1-129"/>
</dbReference>
<dbReference type="PDB" id="4V7L">
    <property type="method" value="X-ray"/>
    <property type="resolution" value="3.00 A"/>
    <property type="chains" value="AK/CK=1-129"/>
</dbReference>
<dbReference type="PDB" id="4V7M">
    <property type="method" value="X-ray"/>
    <property type="resolution" value="3.45 A"/>
    <property type="chains" value="AK/CK=1-129"/>
</dbReference>
<dbReference type="PDB" id="4V7W">
    <property type="method" value="X-ray"/>
    <property type="resolution" value="3.00 A"/>
    <property type="chains" value="AK/CK=1-129"/>
</dbReference>
<dbReference type="PDB" id="4V7X">
    <property type="method" value="X-ray"/>
    <property type="resolution" value="3.00 A"/>
    <property type="chains" value="AK/CK=1-129"/>
</dbReference>
<dbReference type="PDB" id="4V7Y">
    <property type="method" value="X-ray"/>
    <property type="resolution" value="3.00 A"/>
    <property type="chains" value="AK/CK=1-129"/>
</dbReference>
<dbReference type="PDB" id="4V7Z">
    <property type="method" value="X-ray"/>
    <property type="resolution" value="3.10 A"/>
    <property type="chains" value="AK/CK=1-129"/>
</dbReference>
<dbReference type="PDB" id="4V87">
    <property type="method" value="X-ray"/>
    <property type="resolution" value="3.10 A"/>
    <property type="chains" value="BN/CN=1-129"/>
</dbReference>
<dbReference type="PDB" id="4V8A">
    <property type="method" value="X-ray"/>
    <property type="resolution" value="3.20 A"/>
    <property type="chains" value="CK/DK=1-129"/>
</dbReference>
<dbReference type="PDB" id="4V8B">
    <property type="method" value="X-ray"/>
    <property type="resolution" value="3.00 A"/>
    <property type="chains" value="AN/CN=1-129"/>
</dbReference>
<dbReference type="PDB" id="4V8C">
    <property type="method" value="X-ray"/>
    <property type="resolution" value="3.30 A"/>
    <property type="chains" value="CN/DN=1-129"/>
</dbReference>
<dbReference type="PDB" id="4V8D">
    <property type="method" value="X-ray"/>
    <property type="resolution" value="3.00 A"/>
    <property type="chains" value="AN/CN=1-129"/>
</dbReference>
<dbReference type="PDB" id="4V8E">
    <property type="method" value="X-ray"/>
    <property type="resolution" value="3.30 A"/>
    <property type="chains" value="BN/DN=1-129"/>
</dbReference>
<dbReference type="PDB" id="4V8F">
    <property type="method" value="X-ray"/>
    <property type="resolution" value="3.30 A"/>
    <property type="chains" value="BN/CN=1-129"/>
</dbReference>
<dbReference type="PDB" id="4V8G">
    <property type="method" value="X-ray"/>
    <property type="resolution" value="3.00 A"/>
    <property type="chains" value="AK/CK=1-129"/>
</dbReference>
<dbReference type="PDB" id="4V8H">
    <property type="method" value="X-ray"/>
    <property type="resolution" value="3.10 A"/>
    <property type="chains" value="AK/CK=1-129"/>
</dbReference>
<dbReference type="PDB" id="4V8I">
    <property type="method" value="X-ray"/>
    <property type="resolution" value="2.70 A"/>
    <property type="chains" value="AK/CK=1-129"/>
</dbReference>
<dbReference type="PDB" id="4V8J">
    <property type="method" value="X-ray"/>
    <property type="resolution" value="3.90 A"/>
    <property type="chains" value="AK/CK=1-129"/>
</dbReference>
<dbReference type="PDB" id="4V8N">
    <property type="method" value="X-ray"/>
    <property type="resolution" value="3.10 A"/>
    <property type="chains" value="AK/CK=1-129"/>
</dbReference>
<dbReference type="PDB" id="4V8O">
    <property type="method" value="X-ray"/>
    <property type="resolution" value="3.80 A"/>
    <property type="chains" value="AK=1-129"/>
</dbReference>
<dbReference type="PDB" id="4V8Q">
    <property type="method" value="X-ray"/>
    <property type="resolution" value="3.10 A"/>
    <property type="chains" value="BK=1-129"/>
</dbReference>
<dbReference type="PDB" id="4V8U">
    <property type="method" value="X-ray"/>
    <property type="resolution" value="3.70 A"/>
    <property type="chains" value="AK/CK=1-129"/>
</dbReference>
<dbReference type="PDB" id="4V8X">
    <property type="method" value="X-ray"/>
    <property type="resolution" value="3.35 A"/>
    <property type="chains" value="AK/CK=1-129"/>
</dbReference>
<dbReference type="PDB" id="4V90">
    <property type="method" value="X-ray"/>
    <property type="resolution" value="2.95 A"/>
    <property type="chains" value="AK=1-129"/>
</dbReference>
<dbReference type="PDB" id="4V95">
    <property type="method" value="X-ray"/>
    <property type="resolution" value="3.20 A"/>
    <property type="chains" value="AK/CK=1-129"/>
</dbReference>
<dbReference type="PDB" id="4V97">
    <property type="method" value="X-ray"/>
    <property type="resolution" value="3.52 A"/>
    <property type="chains" value="AK/CK=1-129"/>
</dbReference>
<dbReference type="PDB" id="4V9A">
    <property type="method" value="X-ray"/>
    <property type="resolution" value="3.30 A"/>
    <property type="chains" value="AN/CN=1-129"/>
</dbReference>
<dbReference type="PDB" id="4V9B">
    <property type="method" value="X-ray"/>
    <property type="resolution" value="3.10 A"/>
    <property type="chains" value="AN/CN=1-129"/>
</dbReference>
<dbReference type="PDB" id="4V9H">
    <property type="method" value="X-ray"/>
    <property type="resolution" value="2.86 A"/>
    <property type="chains" value="AK=11-129"/>
</dbReference>
<dbReference type="PDB" id="4V9I">
    <property type="method" value="X-ray"/>
    <property type="resolution" value="3.30 A"/>
    <property type="chains" value="AK/CK=11-129"/>
</dbReference>
<dbReference type="PDB" id="4V9R">
    <property type="method" value="X-ray"/>
    <property type="resolution" value="3.00 A"/>
    <property type="chains" value="AK/CK=1-129"/>
</dbReference>
<dbReference type="PDB" id="4V9S">
    <property type="method" value="X-ray"/>
    <property type="resolution" value="3.10 A"/>
    <property type="chains" value="AK/CK=1-129"/>
</dbReference>
<dbReference type="PDB" id="4W2E">
    <property type="method" value="X-ray"/>
    <property type="resolution" value="2.90 A"/>
    <property type="chains" value="k=1-129"/>
</dbReference>
<dbReference type="PDB" id="4W2F">
    <property type="method" value="X-ray"/>
    <property type="resolution" value="2.40 A"/>
    <property type="chains" value="AK/CK=1-129"/>
</dbReference>
<dbReference type="PDB" id="4W2G">
    <property type="method" value="X-ray"/>
    <property type="resolution" value="2.55 A"/>
    <property type="chains" value="AK/CK=1-129"/>
</dbReference>
<dbReference type="PDB" id="4W2H">
    <property type="method" value="X-ray"/>
    <property type="resolution" value="2.70 A"/>
    <property type="chains" value="AK/CK=1-129"/>
</dbReference>
<dbReference type="PDB" id="4W2I">
    <property type="method" value="X-ray"/>
    <property type="resolution" value="2.70 A"/>
    <property type="chains" value="AK/CK=1-129"/>
</dbReference>
<dbReference type="PDB" id="4W4G">
    <property type="method" value="X-ray"/>
    <property type="resolution" value="3.30 A"/>
    <property type="chains" value="QK/XK=1-129"/>
</dbReference>
<dbReference type="PDB" id="4WPO">
    <property type="method" value="X-ray"/>
    <property type="resolution" value="2.80 A"/>
    <property type="chains" value="BK/DK=1-129"/>
</dbReference>
<dbReference type="PDB" id="4WQ1">
    <property type="method" value="X-ray"/>
    <property type="resolution" value="3.10 A"/>
    <property type="chains" value="2A/2I=1-129"/>
</dbReference>
<dbReference type="PDB" id="4WQF">
    <property type="method" value="X-ray"/>
    <property type="resolution" value="2.80 A"/>
    <property type="chains" value="BK/DK=1-129"/>
</dbReference>
<dbReference type="PDB" id="4WQR">
    <property type="method" value="X-ray"/>
    <property type="resolution" value="3.15 A"/>
    <property type="chains" value="2A/2I=1-129"/>
</dbReference>
<dbReference type="PDB" id="4WQU">
    <property type="method" value="X-ray"/>
    <property type="resolution" value="2.80 A"/>
    <property type="chains" value="BK/DK=1-129"/>
</dbReference>
<dbReference type="PDB" id="4WQY">
    <property type="method" value="X-ray"/>
    <property type="resolution" value="2.80 A"/>
    <property type="chains" value="BK/DK=1-129"/>
</dbReference>
<dbReference type="PDB" id="4WR6">
    <property type="method" value="X-ray"/>
    <property type="resolution" value="3.05 A"/>
    <property type="chains" value="2A/2I=1-129"/>
</dbReference>
<dbReference type="PDB" id="4WRA">
    <property type="method" value="X-ray"/>
    <property type="resolution" value="3.05 A"/>
    <property type="chains" value="2A/2I=1-129"/>
</dbReference>
<dbReference type="PDB" id="4WRO">
    <property type="method" value="X-ray"/>
    <property type="resolution" value="3.05 A"/>
    <property type="chains" value="2I=1-129"/>
</dbReference>
<dbReference type="PDB" id="4WSD">
    <property type="method" value="X-ray"/>
    <property type="resolution" value="2.95 A"/>
    <property type="chains" value="2A/2I=1-129"/>
</dbReference>
<dbReference type="PDB" id="4WSM">
    <property type="method" value="X-ray"/>
    <property type="resolution" value="3.30 A"/>
    <property type="chains" value="2A/2I=1-129"/>
</dbReference>
<dbReference type="PDB" id="4WT1">
    <property type="method" value="X-ray"/>
    <property type="resolution" value="3.05 A"/>
    <property type="chains" value="2A/2I=1-129"/>
</dbReference>
<dbReference type="PDB" id="4WT8">
    <property type="method" value="X-ray"/>
    <property type="resolution" value="3.40 A"/>
    <property type="chains" value="AK/BK=11-129"/>
</dbReference>
<dbReference type="PDB" id="4WU1">
    <property type="method" value="X-ray"/>
    <property type="resolution" value="3.20 A"/>
    <property type="chains" value="2A/2I=1-129"/>
</dbReference>
<dbReference type="PDB" id="4WZD">
    <property type="method" value="X-ray"/>
    <property type="resolution" value="3.10 A"/>
    <property type="chains" value="2A/2I=1-129"/>
</dbReference>
<dbReference type="PDB" id="4WZO">
    <property type="method" value="X-ray"/>
    <property type="resolution" value="3.30 A"/>
    <property type="chains" value="2A/2I=1-129"/>
</dbReference>
<dbReference type="PDB" id="4X62">
    <property type="method" value="X-ray"/>
    <property type="resolution" value="3.45 A"/>
    <property type="chains" value="K=11-129"/>
</dbReference>
<dbReference type="PDB" id="4X64">
    <property type="method" value="X-ray"/>
    <property type="resolution" value="3.35 A"/>
    <property type="chains" value="K=11-129"/>
</dbReference>
<dbReference type="PDB" id="4X65">
    <property type="method" value="X-ray"/>
    <property type="resolution" value="3.35 A"/>
    <property type="chains" value="K=11-129"/>
</dbReference>
<dbReference type="PDB" id="4X66">
    <property type="method" value="X-ray"/>
    <property type="resolution" value="3.45 A"/>
    <property type="chains" value="K=11-129"/>
</dbReference>
<dbReference type="PDB" id="4Y4O">
    <property type="method" value="X-ray"/>
    <property type="resolution" value="2.30 A"/>
    <property type="chains" value="1k/2k=1-129"/>
</dbReference>
<dbReference type="PDB" id="4Y4P">
    <property type="method" value="X-ray"/>
    <property type="resolution" value="2.50 A"/>
    <property type="chains" value="1k/2k=1-129"/>
</dbReference>
<dbReference type="PDB" id="4YHH">
    <property type="method" value="X-ray"/>
    <property type="resolution" value="3.42 A"/>
    <property type="chains" value="K=11-125"/>
</dbReference>
<dbReference type="PDB" id="4YPB">
    <property type="method" value="X-ray"/>
    <property type="resolution" value="3.40 A"/>
    <property type="chains" value="QK/XK=1-129"/>
</dbReference>
<dbReference type="PDB" id="4YY3">
    <property type="method" value="X-ray"/>
    <property type="resolution" value="3.60 A"/>
    <property type="chains" value="K=1-129"/>
</dbReference>
<dbReference type="PDB" id="4YZV">
    <property type="method" value="X-ray"/>
    <property type="resolution" value="3.10 A"/>
    <property type="chains" value="QK/XK=1-129"/>
</dbReference>
<dbReference type="PDB" id="4Z3S">
    <property type="method" value="X-ray"/>
    <property type="resolution" value="2.65 A"/>
    <property type="chains" value="1k/2k=1-129"/>
</dbReference>
<dbReference type="PDB" id="4Z8C">
    <property type="method" value="X-ray"/>
    <property type="resolution" value="2.90 A"/>
    <property type="chains" value="1k/2k=1-129"/>
</dbReference>
<dbReference type="PDB" id="4ZER">
    <property type="method" value="X-ray"/>
    <property type="resolution" value="3.10 A"/>
    <property type="chains" value="1k/2k=13-126"/>
</dbReference>
<dbReference type="PDB" id="4ZSN">
    <property type="method" value="X-ray"/>
    <property type="resolution" value="3.60 A"/>
    <property type="chains" value="QK/XK=1-129"/>
</dbReference>
<dbReference type="PDB" id="5A9Z">
    <property type="method" value="EM"/>
    <property type="resolution" value="4.70 A"/>
    <property type="chains" value="BO=11-129"/>
</dbReference>
<dbReference type="PDB" id="5AA0">
    <property type="method" value="EM"/>
    <property type="resolution" value="5.00 A"/>
    <property type="chains" value="BO=11-129"/>
</dbReference>
<dbReference type="PDB" id="5BR8">
    <property type="method" value="X-ray"/>
    <property type="resolution" value="3.40 A"/>
    <property type="chains" value="K=1-129"/>
</dbReference>
<dbReference type="PDB" id="5CZP">
    <property type="method" value="X-ray"/>
    <property type="resolution" value="3.30 A"/>
    <property type="chains" value="QK/XK=1-129"/>
</dbReference>
<dbReference type="PDB" id="5D8B">
    <property type="method" value="X-ray"/>
    <property type="resolution" value="3.63 A"/>
    <property type="chains" value="HC/LA=1-129"/>
</dbReference>
<dbReference type="PDB" id="5DFE">
    <property type="method" value="X-ray"/>
    <property type="resolution" value="3.10 A"/>
    <property type="chains" value="QK/XK=1-129"/>
</dbReference>
<dbReference type="PDB" id="5DOX">
    <property type="method" value="X-ray"/>
    <property type="resolution" value="3.10 A"/>
    <property type="chains" value="1k/2k=1-129"/>
</dbReference>
<dbReference type="PDB" id="5DOY">
    <property type="method" value="X-ray"/>
    <property type="resolution" value="2.60 A"/>
    <property type="chains" value="1k/2k=1-129"/>
</dbReference>
<dbReference type="PDB" id="5E7K">
    <property type="method" value="X-ray"/>
    <property type="resolution" value="3.20 A"/>
    <property type="chains" value="2A/2I=1-129"/>
</dbReference>
<dbReference type="PDB" id="5E81">
    <property type="method" value="X-ray"/>
    <property type="resolution" value="2.95 A"/>
    <property type="chains" value="2A/2I=1-129"/>
</dbReference>
<dbReference type="PDB" id="5EL4">
    <property type="method" value="X-ray"/>
    <property type="resolution" value="3.15 A"/>
    <property type="chains" value="2A/2I=1-129"/>
</dbReference>
<dbReference type="PDB" id="5EL5">
    <property type="method" value="X-ray"/>
    <property type="resolution" value="3.15 A"/>
    <property type="chains" value="2A/2I=1-129"/>
</dbReference>
<dbReference type="PDB" id="5EL6">
    <property type="method" value="X-ray"/>
    <property type="resolution" value="3.10 A"/>
    <property type="chains" value="2A/2I=1-129"/>
</dbReference>
<dbReference type="PDB" id="5EL7">
    <property type="method" value="X-ray"/>
    <property type="resolution" value="3.15 A"/>
    <property type="chains" value="2A/2I=1-129"/>
</dbReference>
<dbReference type="PDB" id="5F8K">
    <property type="method" value="X-ray"/>
    <property type="resolution" value="2.80 A"/>
    <property type="chains" value="1k/2k=13-126"/>
</dbReference>
<dbReference type="PDB" id="5FDU">
    <property type="method" value="X-ray"/>
    <property type="resolution" value="2.90 A"/>
    <property type="chains" value="1k/2k=13-126"/>
</dbReference>
<dbReference type="PDB" id="5FDV">
    <property type="method" value="X-ray"/>
    <property type="resolution" value="2.80 A"/>
    <property type="chains" value="1k/2k=13-126"/>
</dbReference>
<dbReference type="PDB" id="5HAU">
    <property type="method" value="X-ray"/>
    <property type="resolution" value="3.00 A"/>
    <property type="chains" value="1k/2k=1-129"/>
</dbReference>
<dbReference type="PDB" id="5HCP">
    <property type="method" value="X-ray"/>
    <property type="resolution" value="2.89 A"/>
    <property type="chains" value="1k/2k=1-129"/>
</dbReference>
<dbReference type="PDB" id="5HCQ">
    <property type="method" value="X-ray"/>
    <property type="resolution" value="2.80 A"/>
    <property type="chains" value="1k/2k=1-129"/>
</dbReference>
<dbReference type="PDB" id="5HCR">
    <property type="method" value="X-ray"/>
    <property type="resolution" value="2.80 A"/>
    <property type="chains" value="1k/2k=1-129"/>
</dbReference>
<dbReference type="PDB" id="5HD1">
    <property type="method" value="X-ray"/>
    <property type="resolution" value="2.70 A"/>
    <property type="chains" value="1k/2k=1-129"/>
</dbReference>
<dbReference type="PDB" id="5IB7">
    <property type="method" value="X-ray"/>
    <property type="resolution" value="2.99 A"/>
    <property type="chains" value="2A/2I=1-129"/>
</dbReference>
<dbReference type="PDB" id="5IB8">
    <property type="method" value="X-ray"/>
    <property type="resolution" value="3.13 A"/>
    <property type="chains" value="2A/2I=1-129"/>
</dbReference>
<dbReference type="PDB" id="5IBB">
    <property type="method" value="X-ray"/>
    <property type="resolution" value="2.96 A"/>
    <property type="chains" value="2A/2I=1-129"/>
</dbReference>
<dbReference type="PDB" id="5IMQ">
    <property type="method" value="EM"/>
    <property type="resolution" value="3.80 A"/>
    <property type="chains" value="O=1-129"/>
</dbReference>
<dbReference type="PDB" id="5IMR">
    <property type="method" value="EM"/>
    <property type="chains" value="O=1-129"/>
</dbReference>
<dbReference type="PDB" id="5IWA">
    <property type="method" value="X-ray"/>
    <property type="resolution" value="3.50 A"/>
    <property type="chains" value="K=11-125"/>
</dbReference>
<dbReference type="PDB" id="5J30">
    <property type="method" value="X-ray"/>
    <property type="resolution" value="3.20 A"/>
    <property type="chains" value="QK/XK=1-129"/>
</dbReference>
<dbReference type="PDB" id="5J3C">
    <property type="method" value="X-ray"/>
    <property type="resolution" value="3.04 A"/>
    <property type="chains" value="QK/XK=1-129"/>
</dbReference>
<dbReference type="PDB" id="5J4B">
    <property type="method" value="X-ray"/>
    <property type="resolution" value="2.60 A"/>
    <property type="chains" value="1k/2k=1-129"/>
</dbReference>
<dbReference type="PDB" id="5J4C">
    <property type="method" value="X-ray"/>
    <property type="resolution" value="2.80 A"/>
    <property type="chains" value="1k/2k=1-129"/>
</dbReference>
<dbReference type="PDB" id="5J8B">
    <property type="method" value="X-ray"/>
    <property type="resolution" value="2.60 A"/>
    <property type="chains" value="k=1-129"/>
</dbReference>
<dbReference type="PDB" id="5LMN">
    <property type="method" value="EM"/>
    <property type="resolution" value="3.55 A"/>
    <property type="chains" value="K=1-129"/>
</dbReference>
<dbReference type="PDB" id="5LMO">
    <property type="method" value="EM"/>
    <property type="resolution" value="4.30 A"/>
    <property type="chains" value="K=1-129"/>
</dbReference>
<dbReference type="PDB" id="5LMP">
    <property type="method" value="EM"/>
    <property type="resolution" value="5.35 A"/>
    <property type="chains" value="K=1-129"/>
</dbReference>
<dbReference type="PDB" id="5LMQ">
    <property type="method" value="EM"/>
    <property type="resolution" value="4.20 A"/>
    <property type="chains" value="K=1-129"/>
</dbReference>
<dbReference type="PDB" id="5LMR">
    <property type="method" value="EM"/>
    <property type="resolution" value="4.45 A"/>
    <property type="chains" value="K=1-129"/>
</dbReference>
<dbReference type="PDB" id="5LMS">
    <property type="method" value="EM"/>
    <property type="resolution" value="5.10 A"/>
    <property type="chains" value="K=1-129"/>
</dbReference>
<dbReference type="PDB" id="5LMT">
    <property type="method" value="EM"/>
    <property type="resolution" value="4.15 A"/>
    <property type="chains" value="K=1-129"/>
</dbReference>
<dbReference type="PDB" id="5LMU">
    <property type="method" value="EM"/>
    <property type="resolution" value="4.00 A"/>
    <property type="chains" value="K=1-129"/>
</dbReference>
<dbReference type="PDB" id="5LMV">
    <property type="method" value="EM"/>
    <property type="resolution" value="4.90 A"/>
    <property type="chains" value="K=1-129"/>
</dbReference>
<dbReference type="PDB" id="5NDJ">
    <property type="method" value="X-ray"/>
    <property type="resolution" value="3.15 A"/>
    <property type="chains" value="2A/2I=1-129"/>
</dbReference>
<dbReference type="PDB" id="5NDK">
    <property type="method" value="X-ray"/>
    <property type="resolution" value="2.95 A"/>
    <property type="chains" value="2A/2I=1-129"/>
</dbReference>
<dbReference type="PDB" id="5OT7">
    <property type="method" value="EM"/>
    <property type="resolution" value="3.80 A"/>
    <property type="chains" value="J=11-129"/>
</dbReference>
<dbReference type="PDB" id="5UQ7">
    <property type="method" value="EM"/>
    <property type="resolution" value="3.50 A"/>
    <property type="chains" value="k=13-126"/>
</dbReference>
<dbReference type="PDB" id="5UQ8">
    <property type="method" value="EM"/>
    <property type="resolution" value="3.20 A"/>
    <property type="chains" value="k=13-126"/>
</dbReference>
<dbReference type="PDB" id="5VP2">
    <property type="method" value="X-ray"/>
    <property type="resolution" value="2.80 A"/>
    <property type="chains" value="1k/2k=1-129"/>
</dbReference>
<dbReference type="PDB" id="5VPO">
    <property type="method" value="X-ray"/>
    <property type="resolution" value="3.34 A"/>
    <property type="chains" value="QK/XK=1-129"/>
</dbReference>
<dbReference type="PDB" id="5VPP">
    <property type="method" value="X-ray"/>
    <property type="resolution" value="3.90 A"/>
    <property type="chains" value="QK/XK=1-129"/>
</dbReference>
<dbReference type="PDB" id="5W4K">
    <property type="method" value="X-ray"/>
    <property type="resolution" value="2.70 A"/>
    <property type="chains" value="1k/2k=1-129"/>
</dbReference>
<dbReference type="PDB" id="5WIS">
    <property type="method" value="X-ray"/>
    <property type="resolution" value="2.70 A"/>
    <property type="chains" value="1k/2k=1-129"/>
</dbReference>
<dbReference type="PDB" id="5WIT">
    <property type="method" value="X-ray"/>
    <property type="resolution" value="2.60 A"/>
    <property type="chains" value="1k/2k=1-129"/>
</dbReference>
<dbReference type="PDB" id="5WNP">
    <property type="method" value="X-ray"/>
    <property type="resolution" value="3.30 A"/>
    <property type="chains" value="K=11-129"/>
</dbReference>
<dbReference type="PDB" id="5WNQ">
    <property type="method" value="X-ray"/>
    <property type="resolution" value="3.50 A"/>
    <property type="chains" value="K=11-126"/>
</dbReference>
<dbReference type="PDB" id="5WNR">
    <property type="method" value="X-ray"/>
    <property type="resolution" value="3.50 A"/>
    <property type="chains" value="K=11-126"/>
</dbReference>
<dbReference type="PDB" id="5WNS">
    <property type="method" value="X-ray"/>
    <property type="resolution" value="3.50 A"/>
    <property type="chains" value="K=11-126"/>
</dbReference>
<dbReference type="PDB" id="5WNT">
    <property type="method" value="X-ray"/>
    <property type="resolution" value="3.30 A"/>
    <property type="chains" value="K=11-129"/>
</dbReference>
<dbReference type="PDB" id="5WNU">
    <property type="method" value="X-ray"/>
    <property type="resolution" value="3.40 A"/>
    <property type="chains" value="K=11-129"/>
</dbReference>
<dbReference type="PDB" id="5WNV">
    <property type="method" value="X-ray"/>
    <property type="resolution" value="3.30 A"/>
    <property type="chains" value="K=11-129"/>
</dbReference>
<dbReference type="PDB" id="5ZLU">
    <property type="method" value="EM"/>
    <property type="resolution" value="3.60 A"/>
    <property type="chains" value="P=1-129"/>
</dbReference>
<dbReference type="PDB" id="6BUW">
    <property type="method" value="X-ray"/>
    <property type="resolution" value="3.50 A"/>
    <property type="chains" value="QK/XK=1-129"/>
</dbReference>
<dbReference type="PDB" id="6BZ6">
    <property type="method" value="X-ray"/>
    <property type="resolution" value="3.18 A"/>
    <property type="chains" value="QK/XK=1-129"/>
</dbReference>
<dbReference type="PDB" id="6BZ7">
    <property type="method" value="X-ray"/>
    <property type="resolution" value="3.68 A"/>
    <property type="chains" value="QK/XK=1-129"/>
</dbReference>
<dbReference type="PDB" id="6BZ8">
    <property type="method" value="X-ray"/>
    <property type="resolution" value="3.74 A"/>
    <property type="chains" value="QK/XK=1-129"/>
</dbReference>
<dbReference type="PDB" id="6C5L">
    <property type="method" value="X-ray"/>
    <property type="resolution" value="3.20 A"/>
    <property type="chains" value="AK/CK=1-129"/>
</dbReference>
<dbReference type="PDB" id="6CAE">
    <property type="method" value="X-ray"/>
    <property type="resolution" value="2.60 A"/>
    <property type="chains" value="1k/2k=1-129"/>
</dbReference>
<dbReference type="PDB" id="6CAO">
    <property type="method" value="X-ray"/>
    <property type="resolution" value="3.45 A"/>
    <property type="chains" value="K=11-127"/>
</dbReference>
<dbReference type="PDB" id="6CAP">
    <property type="method" value="X-ray"/>
    <property type="resolution" value="3.40 A"/>
    <property type="chains" value="K=11-126"/>
</dbReference>
<dbReference type="PDB" id="6CAQ">
    <property type="method" value="X-ray"/>
    <property type="resolution" value="3.40 A"/>
    <property type="chains" value="K=11-126"/>
</dbReference>
<dbReference type="PDB" id="6CAR">
    <property type="method" value="X-ray"/>
    <property type="resolution" value="3.40 A"/>
    <property type="chains" value="K=2-129"/>
</dbReference>
<dbReference type="PDB" id="6CAS">
    <property type="method" value="X-ray"/>
    <property type="resolution" value="3.50 A"/>
    <property type="chains" value="K=2-129"/>
</dbReference>
<dbReference type="PDB" id="6CFJ">
    <property type="method" value="X-ray"/>
    <property type="resolution" value="2.80 A"/>
    <property type="chains" value="1k/2k=1-129"/>
</dbReference>
<dbReference type="PDB" id="6CFK">
    <property type="method" value="X-ray"/>
    <property type="resolution" value="2.70 A"/>
    <property type="chains" value="1k/2k=1-129"/>
</dbReference>
<dbReference type="PDB" id="6CFL">
    <property type="method" value="X-ray"/>
    <property type="resolution" value="2.60 A"/>
    <property type="chains" value="1k/2k=1-129"/>
</dbReference>
<dbReference type="PDB" id="6CZR">
    <property type="method" value="X-ray"/>
    <property type="resolution" value="3.14 A"/>
    <property type="chains" value="1k/2k=13-126"/>
</dbReference>
<dbReference type="PDB" id="6DTI">
    <property type="method" value="X-ray"/>
    <property type="resolution" value="3.54 A"/>
    <property type="chains" value="K=1-129"/>
</dbReference>
<dbReference type="PDB" id="6FKR">
    <property type="method" value="X-ray"/>
    <property type="resolution" value="3.20 A"/>
    <property type="chains" value="1k/2k=13-126"/>
</dbReference>
<dbReference type="PDB" id="6GSJ">
    <property type="method" value="X-ray"/>
    <property type="resolution" value="2.96 A"/>
    <property type="chains" value="2A/2I=1-129"/>
</dbReference>
<dbReference type="PDB" id="6GSK">
    <property type="method" value="X-ray"/>
    <property type="resolution" value="3.36 A"/>
    <property type="chains" value="2A/2I=1-129"/>
</dbReference>
<dbReference type="PDB" id="6GSL">
    <property type="method" value="X-ray"/>
    <property type="resolution" value="3.16 A"/>
    <property type="chains" value="2A/2I=1-129"/>
</dbReference>
<dbReference type="PDB" id="6GZQ">
    <property type="method" value="EM"/>
    <property type="resolution" value="3.28 A"/>
    <property type="chains" value="K2=11-128"/>
</dbReference>
<dbReference type="PDB" id="6GZX">
    <property type="method" value="EM"/>
    <property type="resolution" value="4.57 A"/>
    <property type="chains" value="K3/K4=11-128"/>
</dbReference>
<dbReference type="PDB" id="6GZZ">
    <property type="method" value="EM"/>
    <property type="resolution" value="4.13 A"/>
    <property type="chains" value="K3/K4=11-128"/>
</dbReference>
<dbReference type="PDB" id="6MKN">
    <property type="method" value="X-ray"/>
    <property type="resolution" value="3.46 A"/>
    <property type="chains" value="K=1-129"/>
</dbReference>
<dbReference type="PDB" id="6MPF">
    <property type="method" value="X-ray"/>
    <property type="resolution" value="3.33 A"/>
    <property type="chains" value="K=11-129"/>
</dbReference>
<dbReference type="PDB" id="6MPI">
    <property type="method" value="X-ray"/>
    <property type="resolution" value="3.33 A"/>
    <property type="chains" value="K=1-129"/>
</dbReference>
<dbReference type="PDB" id="6N9E">
    <property type="method" value="X-ray"/>
    <property type="resolution" value="3.70 A"/>
    <property type="chains" value="1k/2k=1-129"/>
</dbReference>
<dbReference type="PDB" id="6N9F">
    <property type="method" value="X-ray"/>
    <property type="resolution" value="3.70 A"/>
    <property type="chains" value="1k/2k=1-129"/>
</dbReference>
<dbReference type="PDB" id="6ND5">
    <property type="method" value="X-ray"/>
    <property type="resolution" value="2.60 A"/>
    <property type="chains" value="1k/2k=1-129"/>
</dbReference>
<dbReference type="PDB" id="6ND6">
    <property type="method" value="X-ray"/>
    <property type="resolution" value="2.85 A"/>
    <property type="chains" value="1k/2k=1-129"/>
</dbReference>
<dbReference type="PDB" id="6NDK">
    <property type="method" value="X-ray"/>
    <property type="resolution" value="3.64 A"/>
    <property type="chains" value="QK/XK=1-129"/>
</dbReference>
<dbReference type="PDB" id="6NSH">
    <property type="method" value="X-ray"/>
    <property type="resolution" value="3.40 A"/>
    <property type="chains" value="QK/XK=1-129"/>
</dbReference>
<dbReference type="PDB" id="6NTA">
    <property type="method" value="X-ray"/>
    <property type="resolution" value="3.10 A"/>
    <property type="chains" value="QK/XK=1-129"/>
</dbReference>
<dbReference type="PDB" id="6NUO">
    <property type="method" value="X-ray"/>
    <property type="resolution" value="3.20 A"/>
    <property type="chains" value="QK/XK=1-129"/>
</dbReference>
<dbReference type="PDB" id="6NWY">
    <property type="method" value="X-ray"/>
    <property type="resolution" value="3.50 A"/>
    <property type="chains" value="QK/XK=1-129"/>
</dbReference>
<dbReference type="PDB" id="6NY6">
    <property type="method" value="X-ray"/>
    <property type="resolution" value="3.74 A"/>
    <property type="chains" value="K=1-129"/>
</dbReference>
<dbReference type="PDB" id="6O3M">
    <property type="method" value="X-ray"/>
    <property type="resolution" value="3.97 A"/>
    <property type="chains" value="QK/XK=1-129"/>
</dbReference>
<dbReference type="PDB" id="6O97">
    <property type="method" value="X-ray"/>
    <property type="resolution" value="2.75 A"/>
    <property type="chains" value="1k/2k=1-129"/>
</dbReference>
<dbReference type="PDB" id="6OF1">
    <property type="method" value="X-ray"/>
    <property type="resolution" value="2.80 A"/>
    <property type="chains" value="1k/2k=1-129"/>
</dbReference>
<dbReference type="PDB" id="6OF6">
    <property type="method" value="X-ray"/>
    <property type="resolution" value="3.20 A"/>
    <property type="chains" value="QK/XK=1-129"/>
</dbReference>
<dbReference type="PDB" id="6OJ2">
    <property type="method" value="X-ray"/>
    <property type="resolution" value="3.20 A"/>
    <property type="chains" value="QK/XK=1-129"/>
</dbReference>
<dbReference type="PDB" id="6OPE">
    <property type="method" value="X-ray"/>
    <property type="resolution" value="3.10 A"/>
    <property type="chains" value="QK/XK=1-129"/>
</dbReference>
<dbReference type="PDB" id="6ORD">
    <property type="method" value="X-ray"/>
    <property type="resolution" value="3.10 A"/>
    <property type="chains" value="QK/XK=1-129"/>
</dbReference>
<dbReference type="PDB" id="6OSI">
    <property type="method" value="X-ray"/>
    <property type="resolution" value="4.14 A"/>
    <property type="chains" value="QK/XK=1-129"/>
</dbReference>
<dbReference type="PDB" id="6OTR">
    <property type="method" value="X-ray"/>
    <property type="resolution" value="3.12 A"/>
    <property type="chains" value="QK/XK=1-129"/>
</dbReference>
<dbReference type="PDB" id="6OXA">
    <property type="method" value="X-ray"/>
    <property type="resolution" value="3.25 A"/>
    <property type="chains" value="QK/XK=1-129"/>
</dbReference>
<dbReference type="PDB" id="6OXI">
    <property type="method" value="X-ray"/>
    <property type="resolution" value="3.50 A"/>
    <property type="chains" value="QK/XK=1-129"/>
</dbReference>
<dbReference type="PDB" id="6Q95">
    <property type="method" value="EM"/>
    <property type="resolution" value="3.70 A"/>
    <property type="chains" value="p=11-129"/>
</dbReference>
<dbReference type="PDB" id="6QNQ">
    <property type="method" value="X-ray"/>
    <property type="resolution" value="3.50 A"/>
    <property type="chains" value="2A/2I=1-129"/>
</dbReference>
<dbReference type="PDB" id="6QNR">
    <property type="method" value="X-ray"/>
    <property type="resolution" value="3.10 A"/>
    <property type="chains" value="2A/2I=1-129"/>
</dbReference>
<dbReference type="PDB" id="6UCQ">
    <property type="method" value="X-ray"/>
    <property type="resolution" value="3.50 A"/>
    <property type="chains" value="1k/2k=1-129"/>
</dbReference>
<dbReference type="PDB" id="6UO1">
    <property type="method" value="X-ray"/>
    <property type="resolution" value="2.95 A"/>
    <property type="chains" value="1k/2k=1-129"/>
</dbReference>
<dbReference type="PDB" id="6XHV">
    <property type="method" value="X-ray"/>
    <property type="resolution" value="2.40 A"/>
    <property type="chains" value="1k/2k=1-129"/>
</dbReference>
<dbReference type="PDB" id="6XHW">
    <property type="method" value="X-ray"/>
    <property type="resolution" value="2.50 A"/>
    <property type="chains" value="1k/2k=1-129"/>
</dbReference>
<dbReference type="PDB" id="6XHX">
    <property type="method" value="X-ray"/>
    <property type="resolution" value="2.55 A"/>
    <property type="chains" value="1k/2k=1-129"/>
</dbReference>
<dbReference type="PDB" id="6XHY">
    <property type="method" value="X-ray"/>
    <property type="resolution" value="2.60 A"/>
    <property type="chains" value="1k/2k=1-129"/>
</dbReference>
<dbReference type="PDB" id="6XQD">
    <property type="method" value="X-ray"/>
    <property type="resolution" value="2.80 A"/>
    <property type="chains" value="1k/2k=1-129"/>
</dbReference>
<dbReference type="PDB" id="6XQE">
    <property type="method" value="X-ray"/>
    <property type="resolution" value="3.00 A"/>
    <property type="chains" value="1k/2k=1-129"/>
</dbReference>
<dbReference type="PDB" id="7AZO">
    <property type="method" value="X-ray"/>
    <property type="resolution" value="3.30 A"/>
    <property type="chains" value="S11A/S11B=1-129"/>
</dbReference>
<dbReference type="PDB" id="7AZS">
    <property type="method" value="X-ray"/>
    <property type="resolution" value="3.10 A"/>
    <property type="chains" value="S11A/S11B=1-129"/>
</dbReference>
<dbReference type="PDB" id="7DUG">
    <property type="method" value="X-ray"/>
    <property type="resolution" value="3.75 A"/>
    <property type="chains" value="K=1-129"/>
</dbReference>
<dbReference type="PDB" id="7DUH">
    <property type="method" value="X-ray"/>
    <property type="resolution" value="3.75 A"/>
    <property type="chains" value="K=1-129"/>
</dbReference>
<dbReference type="PDB" id="7DUI">
    <property type="method" value="X-ray"/>
    <property type="resolution" value="3.62 A"/>
    <property type="chains" value="K=1-129"/>
</dbReference>
<dbReference type="PDB" id="7DUJ">
    <property type="method" value="X-ray"/>
    <property type="resolution" value="3.75 A"/>
    <property type="chains" value="K=1-129"/>
</dbReference>
<dbReference type="PDB" id="7DUK">
    <property type="method" value="X-ray"/>
    <property type="resolution" value="3.60 A"/>
    <property type="chains" value="K=1-129"/>
</dbReference>
<dbReference type="PDB" id="7DUL">
    <property type="method" value="X-ray"/>
    <property type="resolution" value="3.62 A"/>
    <property type="chains" value="K=1-129"/>
</dbReference>
<dbReference type="PDB" id="7JQL">
    <property type="method" value="X-ray"/>
    <property type="resolution" value="3.00 A"/>
    <property type="chains" value="1k/2k=1-129"/>
</dbReference>
<dbReference type="PDB" id="7JQM">
    <property type="method" value="X-ray"/>
    <property type="resolution" value="3.05 A"/>
    <property type="chains" value="1k/2k=1-129"/>
</dbReference>
<dbReference type="PDB" id="7LH5">
    <property type="method" value="X-ray"/>
    <property type="resolution" value="3.27 A"/>
    <property type="chains" value="AK/CK=1-129"/>
</dbReference>
<dbReference type="PDB" id="7MD7">
    <property type="method" value="X-ray"/>
    <property type="resolution" value="2.80 A"/>
    <property type="chains" value="1k/2k=1-129"/>
</dbReference>
<dbReference type="PDB" id="7RQ8">
    <property type="method" value="X-ray"/>
    <property type="resolution" value="2.50 A"/>
    <property type="chains" value="1k/2k=1-129"/>
</dbReference>
<dbReference type="PDB" id="7RQ9">
    <property type="method" value="X-ray"/>
    <property type="resolution" value="2.60 A"/>
    <property type="chains" value="1k/2k=1-129"/>
</dbReference>
<dbReference type="PDB" id="7RQA">
    <property type="method" value="X-ray"/>
    <property type="resolution" value="2.40 A"/>
    <property type="chains" value="1k/2k=1-129"/>
</dbReference>
<dbReference type="PDB" id="7RQB">
    <property type="method" value="X-ray"/>
    <property type="resolution" value="2.45 A"/>
    <property type="chains" value="1k/2k=1-129"/>
</dbReference>
<dbReference type="PDB" id="7RQC">
    <property type="method" value="X-ray"/>
    <property type="resolution" value="2.50 A"/>
    <property type="chains" value="1k/2k=1-129"/>
</dbReference>
<dbReference type="PDB" id="7RQD">
    <property type="method" value="X-ray"/>
    <property type="resolution" value="2.50 A"/>
    <property type="chains" value="1k/2k=1-129"/>
</dbReference>
<dbReference type="PDB" id="7RQE">
    <property type="method" value="X-ray"/>
    <property type="resolution" value="2.40 A"/>
    <property type="chains" value="1k/2k=1-129"/>
</dbReference>
<dbReference type="PDB" id="7U2H">
    <property type="method" value="X-ray"/>
    <property type="resolution" value="2.55 A"/>
    <property type="chains" value="1k/2k=1-129"/>
</dbReference>
<dbReference type="PDB" id="7U2I">
    <property type="method" value="X-ray"/>
    <property type="resolution" value="2.55 A"/>
    <property type="chains" value="1k/2k=1-129"/>
</dbReference>
<dbReference type="PDB" id="7U2J">
    <property type="method" value="X-ray"/>
    <property type="resolution" value="2.55 A"/>
    <property type="chains" value="1k/2k=1-129"/>
</dbReference>
<dbReference type="PDB" id="7V2L">
    <property type="method" value="EM"/>
    <property type="resolution" value="3.30 A"/>
    <property type="chains" value="K=1-129"/>
</dbReference>
<dbReference type="PDB" id="7V2M">
    <property type="method" value="EM"/>
    <property type="resolution" value="3.40 A"/>
    <property type="chains" value="K=1-129"/>
</dbReference>
<dbReference type="PDB" id="7V2N">
    <property type="method" value="EM"/>
    <property type="resolution" value="3.60 A"/>
    <property type="chains" value="K=1-129"/>
</dbReference>
<dbReference type="PDB" id="7V2O">
    <property type="method" value="EM"/>
    <property type="resolution" value="3.50 A"/>
    <property type="chains" value="K=1-129"/>
</dbReference>
<dbReference type="PDB" id="7V2P">
    <property type="method" value="EM"/>
    <property type="resolution" value="3.30 A"/>
    <property type="chains" value="K=1-129"/>
</dbReference>
<dbReference type="PDB" id="7V2Q">
    <property type="method" value="EM"/>
    <property type="resolution" value="3.24 A"/>
    <property type="chains" value="K=1-129"/>
</dbReference>
<dbReference type="PDB" id="8CVJ">
    <property type="method" value="X-ray"/>
    <property type="resolution" value="2.40 A"/>
    <property type="chains" value="1k/2k=1-129"/>
</dbReference>
<dbReference type="PDB" id="8CVK">
    <property type="method" value="X-ray"/>
    <property type="resolution" value="2.50 A"/>
    <property type="chains" value="1k/2k=1-129"/>
</dbReference>
<dbReference type="PDB" id="8CVL">
    <property type="method" value="X-ray"/>
    <property type="resolution" value="2.30 A"/>
    <property type="chains" value="1k/2k=1-129"/>
</dbReference>
<dbReference type="PDB" id="8EKB">
    <property type="method" value="X-ray"/>
    <property type="resolution" value="2.70 A"/>
    <property type="chains" value="1k/2k=1-129"/>
</dbReference>
<dbReference type="PDB" id="8EV6">
    <property type="method" value="X-ray"/>
    <property type="resolution" value="2.95 A"/>
    <property type="chains" value="1k/2k=1-129"/>
</dbReference>
<dbReference type="PDB" id="8EV7">
    <property type="method" value="X-ray"/>
    <property type="resolution" value="2.89 A"/>
    <property type="chains" value="1k/2k=1-129"/>
</dbReference>
<dbReference type="PDB" id="8FC1">
    <property type="method" value="X-ray"/>
    <property type="resolution" value="2.50 A"/>
    <property type="chains" value="1k/2k=1-129"/>
</dbReference>
<dbReference type="PDB" id="8FC2">
    <property type="method" value="X-ray"/>
    <property type="resolution" value="2.50 A"/>
    <property type="chains" value="1k/2k=1-129"/>
</dbReference>
<dbReference type="PDB" id="8FC3">
    <property type="method" value="X-ray"/>
    <property type="resolution" value="2.60 A"/>
    <property type="chains" value="1k/2k=1-129"/>
</dbReference>
<dbReference type="PDB" id="8FC4">
    <property type="method" value="X-ray"/>
    <property type="resolution" value="2.45 A"/>
    <property type="chains" value="1k/2k=1-129"/>
</dbReference>
<dbReference type="PDB" id="8FC5">
    <property type="method" value="X-ray"/>
    <property type="resolution" value="2.65 A"/>
    <property type="chains" value="1k/2k=1-129"/>
</dbReference>
<dbReference type="PDB" id="8FC6">
    <property type="method" value="X-ray"/>
    <property type="resolution" value="2.35 A"/>
    <property type="chains" value="1k/2k=1-129"/>
</dbReference>
<dbReference type="PDB" id="8FOM">
    <property type="method" value="X-ray"/>
    <property type="resolution" value="3.58 A"/>
    <property type="chains" value="QK/XK=1-129"/>
</dbReference>
<dbReference type="PDB" id="8FON">
    <property type="method" value="X-ray"/>
    <property type="resolution" value="3.64 A"/>
    <property type="chains" value="QK/XK=1-129"/>
</dbReference>
<dbReference type="PDB" id="8G29">
    <property type="method" value="X-ray"/>
    <property type="resolution" value="2.55 A"/>
    <property type="chains" value="1k/2k=1-129"/>
</dbReference>
<dbReference type="PDB" id="8G2A">
    <property type="method" value="X-ray"/>
    <property type="resolution" value="2.45 A"/>
    <property type="chains" value="1k/2k=1-129"/>
</dbReference>
<dbReference type="PDB" id="8G2B">
    <property type="method" value="X-ray"/>
    <property type="resolution" value="2.55 A"/>
    <property type="chains" value="1k/2k=1-129"/>
</dbReference>
<dbReference type="PDB" id="8G2C">
    <property type="method" value="X-ray"/>
    <property type="resolution" value="2.65 A"/>
    <property type="chains" value="1k/2k=1-129"/>
</dbReference>
<dbReference type="PDB" id="8G2D">
    <property type="method" value="X-ray"/>
    <property type="resolution" value="2.70 A"/>
    <property type="chains" value="1k/2k=1-129"/>
</dbReference>
<dbReference type="PDB" id="8T8B">
    <property type="method" value="X-ray"/>
    <property type="resolution" value="2.65 A"/>
    <property type="chains" value="1k/2k=1-129"/>
</dbReference>
<dbReference type="PDB" id="8T8C">
    <property type="method" value="X-ray"/>
    <property type="resolution" value="2.60 A"/>
    <property type="chains" value="1k/2k=1-129"/>
</dbReference>
<dbReference type="PDB" id="8UD6">
    <property type="method" value="X-ray"/>
    <property type="resolution" value="2.70 A"/>
    <property type="chains" value="1k/2k=1-129"/>
</dbReference>
<dbReference type="PDB" id="8UD7">
    <property type="method" value="X-ray"/>
    <property type="resolution" value="2.55 A"/>
    <property type="chains" value="1k/2k=1-129"/>
</dbReference>
<dbReference type="PDB" id="8UD8">
    <property type="method" value="X-ray"/>
    <property type="resolution" value="2.60 A"/>
    <property type="chains" value="1k/2k=1-129"/>
</dbReference>
<dbReference type="PDB" id="8UVR">
    <property type="method" value="X-ray"/>
    <property type="resolution" value="2.60 A"/>
    <property type="chains" value="1k/2k=1-129"/>
</dbReference>
<dbReference type="PDB" id="8UVS">
    <property type="method" value="X-ray"/>
    <property type="resolution" value="2.75 A"/>
    <property type="chains" value="1k/2k=1-129"/>
</dbReference>
<dbReference type="PDB" id="8VTU">
    <property type="method" value="X-ray"/>
    <property type="resolution" value="2.40 A"/>
    <property type="chains" value="1k/2k=1-129"/>
</dbReference>
<dbReference type="PDB" id="8VTV">
    <property type="method" value="X-ray"/>
    <property type="resolution" value="2.55 A"/>
    <property type="chains" value="1k/2k=1-129"/>
</dbReference>
<dbReference type="PDB" id="8VTW">
    <property type="method" value="X-ray"/>
    <property type="resolution" value="2.35 A"/>
    <property type="chains" value="1k/2k=1-129"/>
</dbReference>
<dbReference type="PDB" id="8VTX">
    <property type="method" value="X-ray"/>
    <property type="resolution" value="2.40 A"/>
    <property type="chains" value="1k/2k=1-129"/>
</dbReference>
<dbReference type="PDB" id="8VTY">
    <property type="method" value="X-ray"/>
    <property type="resolution" value="2.60 A"/>
    <property type="chains" value="1k/2k=1-129"/>
</dbReference>
<dbReference type="PDB" id="9B00">
    <property type="method" value="X-ray"/>
    <property type="resolution" value="2.80 A"/>
    <property type="chains" value="1k/2k=1-129"/>
</dbReference>
<dbReference type="PDB" id="9D0J">
    <property type="method" value="X-ray"/>
    <property type="resolution" value="2.50 A"/>
    <property type="chains" value="1k/2k=1-129"/>
</dbReference>
<dbReference type="PDB" id="9D7R">
    <property type="method" value="X-ray"/>
    <property type="resolution" value="2.70 A"/>
    <property type="chains" value="1k/2k=1-129"/>
</dbReference>
<dbReference type="PDB" id="9D7S">
    <property type="method" value="X-ray"/>
    <property type="resolution" value="2.85 A"/>
    <property type="chains" value="1k/2k=1-129"/>
</dbReference>
<dbReference type="PDB" id="9D7T">
    <property type="method" value="X-ray"/>
    <property type="resolution" value="2.70 A"/>
    <property type="chains" value="1k/2k=1-129"/>
</dbReference>
<dbReference type="PDB" id="9DFC">
    <property type="method" value="X-ray"/>
    <property type="resolution" value="2.50 A"/>
    <property type="chains" value="1k/2k=1-129"/>
</dbReference>
<dbReference type="PDB" id="9DFD">
    <property type="method" value="X-ray"/>
    <property type="resolution" value="2.60 A"/>
    <property type="chains" value="1k/2k=1-129"/>
</dbReference>
<dbReference type="PDB" id="9DFE">
    <property type="method" value="X-ray"/>
    <property type="resolution" value="2.60 A"/>
    <property type="chains" value="1k/2k=1-129"/>
</dbReference>
<dbReference type="PDBsum" id="1FJG"/>
<dbReference type="PDBsum" id="1HNW"/>
<dbReference type="PDBsum" id="1HNX"/>
<dbReference type="PDBsum" id="1HNZ"/>
<dbReference type="PDBsum" id="1HR0"/>
<dbReference type="PDBsum" id="1I94"/>
<dbReference type="PDBsum" id="1I95"/>
<dbReference type="PDBsum" id="1I96"/>
<dbReference type="PDBsum" id="1I97"/>
<dbReference type="PDBsum" id="1IBK"/>
<dbReference type="PDBsum" id="1IBL"/>
<dbReference type="PDBsum" id="1IBM"/>
<dbReference type="PDBsum" id="1J5E"/>
<dbReference type="PDBsum" id="1JGO"/>
<dbReference type="PDBsum" id="1JGP"/>
<dbReference type="PDBsum" id="1JGQ"/>
<dbReference type="PDBsum" id="1ML5"/>
<dbReference type="PDBsum" id="1N32"/>
<dbReference type="PDBsum" id="1N33"/>
<dbReference type="PDBsum" id="1N34"/>
<dbReference type="PDBsum" id="1N36"/>
<dbReference type="PDBsum" id="1VVJ"/>
<dbReference type="PDBsum" id="1VY4"/>
<dbReference type="PDBsum" id="1VY5"/>
<dbReference type="PDBsum" id="1VY6"/>
<dbReference type="PDBsum" id="1VY7"/>
<dbReference type="PDBsum" id="1X18"/>
<dbReference type="PDBsum" id="1XMO"/>
<dbReference type="PDBsum" id="1XMQ"/>
<dbReference type="PDBsum" id="1XNQ"/>
<dbReference type="PDBsum" id="1XNR"/>
<dbReference type="PDBsum" id="2E5L"/>
<dbReference type="PDBsum" id="2F4V"/>
<dbReference type="PDBsum" id="2HHH"/>
<dbReference type="PDBsum" id="2UU9"/>
<dbReference type="PDBsum" id="2UUA"/>
<dbReference type="PDBsum" id="2UUB"/>
<dbReference type="PDBsum" id="2UUC"/>
<dbReference type="PDBsum" id="2UXB"/>
<dbReference type="PDBsum" id="2UXC"/>
<dbReference type="PDBsum" id="2UXD"/>
<dbReference type="PDBsum" id="2VQE"/>
<dbReference type="PDBsum" id="2VQF"/>
<dbReference type="PDBsum" id="2ZM6"/>
<dbReference type="PDBsum" id="3OTO"/>
<dbReference type="PDBsum" id="3T1H"/>
<dbReference type="PDBsum" id="3T1Y"/>
<dbReference type="PDBsum" id="4AQY"/>
<dbReference type="PDBsum" id="4B3M"/>
<dbReference type="PDBsum" id="4B3R"/>
<dbReference type="PDBsum" id="4B3S"/>
<dbReference type="PDBsum" id="4B3T"/>
<dbReference type="PDBsum" id="4DR1"/>
<dbReference type="PDBsum" id="4DR2"/>
<dbReference type="PDBsum" id="4DR3"/>
<dbReference type="PDBsum" id="4DR4"/>
<dbReference type="PDBsum" id="4DR5"/>
<dbReference type="PDBsum" id="4DR6"/>
<dbReference type="PDBsum" id="4DR7"/>
<dbReference type="PDBsum" id="4DUY"/>
<dbReference type="PDBsum" id="4DUZ"/>
<dbReference type="PDBsum" id="4DV0"/>
<dbReference type="PDBsum" id="4DV1"/>
<dbReference type="PDBsum" id="4DV2"/>
<dbReference type="PDBsum" id="4DV3"/>
<dbReference type="PDBsum" id="4DV4"/>
<dbReference type="PDBsum" id="4DV5"/>
<dbReference type="PDBsum" id="4DV6"/>
<dbReference type="PDBsum" id="4DV7"/>
<dbReference type="PDBsum" id="4GKJ"/>
<dbReference type="PDBsum" id="4GKK"/>
<dbReference type="PDBsum" id="4JI0"/>
<dbReference type="PDBsum" id="4JI1"/>
<dbReference type="PDBsum" id="4JI2"/>
<dbReference type="PDBsum" id="4JI3"/>
<dbReference type="PDBsum" id="4JI4"/>
<dbReference type="PDBsum" id="4JI5"/>
<dbReference type="PDBsum" id="4JI6"/>
<dbReference type="PDBsum" id="4JI7"/>
<dbReference type="PDBsum" id="4JI8"/>
<dbReference type="PDBsum" id="4JV5"/>
<dbReference type="PDBsum" id="4JYA"/>
<dbReference type="PDBsum" id="4K0K"/>
<dbReference type="PDBsum" id="4KHP"/>
<dbReference type="PDBsum" id="4L47"/>
<dbReference type="PDBsum" id="4L71"/>
<dbReference type="PDBsum" id="4LEL"/>
<dbReference type="PDBsum" id="4LF4"/>
<dbReference type="PDBsum" id="4LF5"/>
<dbReference type="PDBsum" id="4LF6"/>
<dbReference type="PDBsum" id="4LF7"/>
<dbReference type="PDBsum" id="4LF8"/>
<dbReference type="PDBsum" id="4LF9"/>
<dbReference type="PDBsum" id="4LFA"/>
<dbReference type="PDBsum" id="4LFB"/>
<dbReference type="PDBsum" id="4LFC"/>
<dbReference type="PDBsum" id="4LFZ"/>
<dbReference type="PDBsum" id="4LNT"/>
<dbReference type="PDBsum" id="4LSK"/>
<dbReference type="PDBsum" id="4LT8"/>
<dbReference type="PDBsum" id="4NXM"/>
<dbReference type="PDBsum" id="4NXN"/>
<dbReference type="PDBsum" id="4OX9"/>
<dbReference type="PDBsum" id="4P6F"/>
<dbReference type="PDBsum" id="4P70"/>
<dbReference type="PDBsum" id="4TUA"/>
<dbReference type="PDBsum" id="4TUB"/>
<dbReference type="PDBsum" id="4TUC"/>
<dbReference type="PDBsum" id="4TUD"/>
<dbReference type="PDBsum" id="4TUE"/>
<dbReference type="PDBsum" id="4V42"/>
<dbReference type="PDBsum" id="4V49"/>
<dbReference type="PDBsum" id="4V4A"/>
<dbReference type="PDBsum" id="4V4I"/>
<dbReference type="PDBsum" id="4V4P"/>
<dbReference type="PDBsum" id="4V4R"/>
<dbReference type="PDBsum" id="4V4S"/>
<dbReference type="PDBsum" id="4V4T"/>
<dbReference type="PDBsum" id="4V4X"/>
<dbReference type="PDBsum" id="4V4Y"/>
<dbReference type="PDBsum" id="4V4Z"/>
<dbReference type="PDBsum" id="4V51"/>
<dbReference type="PDBsum" id="4V5A"/>
<dbReference type="PDBsum" id="4V5C"/>
<dbReference type="PDBsum" id="4V5D"/>
<dbReference type="PDBsum" id="4V5E"/>
<dbReference type="PDBsum" id="4V5F"/>
<dbReference type="PDBsum" id="4V5G"/>
<dbReference type="PDBsum" id="4V5J"/>
<dbReference type="PDBsum" id="4V5K"/>
<dbReference type="PDBsum" id="4V5L"/>
<dbReference type="PDBsum" id="4V5M"/>
<dbReference type="PDBsum" id="4V5N"/>
<dbReference type="PDBsum" id="4V5P"/>
<dbReference type="PDBsum" id="4V5Q"/>
<dbReference type="PDBsum" id="4V5R"/>
<dbReference type="PDBsum" id="4V5S"/>
<dbReference type="PDBsum" id="4V68"/>
<dbReference type="PDBsum" id="4V6A"/>
<dbReference type="PDBsum" id="4V6F"/>
<dbReference type="PDBsum" id="4V6G"/>
<dbReference type="PDBsum" id="4V7J"/>
<dbReference type="PDBsum" id="4V7K"/>
<dbReference type="PDBsum" id="4V7L"/>
<dbReference type="PDBsum" id="4V7M"/>
<dbReference type="PDBsum" id="4V7W"/>
<dbReference type="PDBsum" id="4V7X"/>
<dbReference type="PDBsum" id="4V7Y"/>
<dbReference type="PDBsum" id="4V7Z"/>
<dbReference type="PDBsum" id="4V87"/>
<dbReference type="PDBsum" id="4V8A"/>
<dbReference type="PDBsum" id="4V8B"/>
<dbReference type="PDBsum" id="4V8C"/>
<dbReference type="PDBsum" id="4V8D"/>
<dbReference type="PDBsum" id="4V8E"/>
<dbReference type="PDBsum" id="4V8F"/>
<dbReference type="PDBsum" id="4V8G"/>
<dbReference type="PDBsum" id="4V8H"/>
<dbReference type="PDBsum" id="4V8I"/>
<dbReference type="PDBsum" id="4V8J"/>
<dbReference type="PDBsum" id="4V8N"/>
<dbReference type="PDBsum" id="4V8O"/>
<dbReference type="PDBsum" id="4V8Q"/>
<dbReference type="PDBsum" id="4V8U"/>
<dbReference type="PDBsum" id="4V8X"/>
<dbReference type="PDBsum" id="4V90"/>
<dbReference type="PDBsum" id="4V95"/>
<dbReference type="PDBsum" id="4V97"/>
<dbReference type="PDBsum" id="4V9A"/>
<dbReference type="PDBsum" id="4V9B"/>
<dbReference type="PDBsum" id="4V9H"/>
<dbReference type="PDBsum" id="4V9I"/>
<dbReference type="PDBsum" id="4V9R"/>
<dbReference type="PDBsum" id="4V9S"/>
<dbReference type="PDBsum" id="4W2E"/>
<dbReference type="PDBsum" id="4W2F"/>
<dbReference type="PDBsum" id="4W2G"/>
<dbReference type="PDBsum" id="4W2H"/>
<dbReference type="PDBsum" id="4W2I"/>
<dbReference type="PDBsum" id="4W4G"/>
<dbReference type="PDBsum" id="4WPO"/>
<dbReference type="PDBsum" id="4WQ1"/>
<dbReference type="PDBsum" id="4WQF"/>
<dbReference type="PDBsum" id="4WQR"/>
<dbReference type="PDBsum" id="4WQU"/>
<dbReference type="PDBsum" id="4WQY"/>
<dbReference type="PDBsum" id="4WR6"/>
<dbReference type="PDBsum" id="4WRA"/>
<dbReference type="PDBsum" id="4WRO"/>
<dbReference type="PDBsum" id="4WSD"/>
<dbReference type="PDBsum" id="4WSM"/>
<dbReference type="PDBsum" id="4WT1"/>
<dbReference type="PDBsum" id="4WT8"/>
<dbReference type="PDBsum" id="4WU1"/>
<dbReference type="PDBsum" id="4WZD"/>
<dbReference type="PDBsum" id="4WZO"/>
<dbReference type="PDBsum" id="4X62"/>
<dbReference type="PDBsum" id="4X64"/>
<dbReference type="PDBsum" id="4X65"/>
<dbReference type="PDBsum" id="4X66"/>
<dbReference type="PDBsum" id="4Y4O"/>
<dbReference type="PDBsum" id="4Y4P"/>
<dbReference type="PDBsum" id="4YHH"/>
<dbReference type="PDBsum" id="4YPB"/>
<dbReference type="PDBsum" id="4YY3"/>
<dbReference type="PDBsum" id="4YZV"/>
<dbReference type="PDBsum" id="4Z3S"/>
<dbReference type="PDBsum" id="4Z8C"/>
<dbReference type="PDBsum" id="4ZER"/>
<dbReference type="PDBsum" id="4ZSN"/>
<dbReference type="PDBsum" id="5A9Z"/>
<dbReference type="PDBsum" id="5AA0"/>
<dbReference type="PDBsum" id="5BR8"/>
<dbReference type="PDBsum" id="5CZP"/>
<dbReference type="PDBsum" id="5D8B"/>
<dbReference type="PDBsum" id="5DFE"/>
<dbReference type="PDBsum" id="5DOX"/>
<dbReference type="PDBsum" id="5DOY"/>
<dbReference type="PDBsum" id="5E7K"/>
<dbReference type="PDBsum" id="5E81"/>
<dbReference type="PDBsum" id="5EL4"/>
<dbReference type="PDBsum" id="5EL5"/>
<dbReference type="PDBsum" id="5EL6"/>
<dbReference type="PDBsum" id="5EL7"/>
<dbReference type="PDBsum" id="5F8K"/>
<dbReference type="PDBsum" id="5FDU"/>
<dbReference type="PDBsum" id="5FDV"/>
<dbReference type="PDBsum" id="5HAU"/>
<dbReference type="PDBsum" id="5HCP"/>
<dbReference type="PDBsum" id="5HCQ"/>
<dbReference type="PDBsum" id="5HCR"/>
<dbReference type="PDBsum" id="5HD1"/>
<dbReference type="PDBsum" id="5IB7"/>
<dbReference type="PDBsum" id="5IB8"/>
<dbReference type="PDBsum" id="5IBB"/>
<dbReference type="PDBsum" id="5IMQ"/>
<dbReference type="PDBsum" id="5IMR"/>
<dbReference type="PDBsum" id="5IWA"/>
<dbReference type="PDBsum" id="5J30"/>
<dbReference type="PDBsum" id="5J3C"/>
<dbReference type="PDBsum" id="5J4B"/>
<dbReference type="PDBsum" id="5J4C"/>
<dbReference type="PDBsum" id="5J8B"/>
<dbReference type="PDBsum" id="5LMN"/>
<dbReference type="PDBsum" id="5LMO"/>
<dbReference type="PDBsum" id="5LMP"/>
<dbReference type="PDBsum" id="5LMQ"/>
<dbReference type="PDBsum" id="5LMR"/>
<dbReference type="PDBsum" id="5LMS"/>
<dbReference type="PDBsum" id="5LMT"/>
<dbReference type="PDBsum" id="5LMU"/>
<dbReference type="PDBsum" id="5LMV"/>
<dbReference type="PDBsum" id="5NDJ"/>
<dbReference type="PDBsum" id="5NDK"/>
<dbReference type="PDBsum" id="5OT7"/>
<dbReference type="PDBsum" id="5UQ7"/>
<dbReference type="PDBsum" id="5UQ8"/>
<dbReference type="PDBsum" id="5VP2"/>
<dbReference type="PDBsum" id="5VPO"/>
<dbReference type="PDBsum" id="5VPP"/>
<dbReference type="PDBsum" id="5W4K"/>
<dbReference type="PDBsum" id="5WIS"/>
<dbReference type="PDBsum" id="5WIT"/>
<dbReference type="PDBsum" id="5WNP"/>
<dbReference type="PDBsum" id="5WNQ"/>
<dbReference type="PDBsum" id="5WNR"/>
<dbReference type="PDBsum" id="5WNS"/>
<dbReference type="PDBsum" id="5WNT"/>
<dbReference type="PDBsum" id="5WNU"/>
<dbReference type="PDBsum" id="5WNV"/>
<dbReference type="PDBsum" id="5ZLU"/>
<dbReference type="PDBsum" id="6BUW"/>
<dbReference type="PDBsum" id="6BZ6"/>
<dbReference type="PDBsum" id="6BZ7"/>
<dbReference type="PDBsum" id="6BZ8"/>
<dbReference type="PDBsum" id="6C5L"/>
<dbReference type="PDBsum" id="6CAE"/>
<dbReference type="PDBsum" id="6CAO"/>
<dbReference type="PDBsum" id="6CAP"/>
<dbReference type="PDBsum" id="6CAQ"/>
<dbReference type="PDBsum" id="6CAR"/>
<dbReference type="PDBsum" id="6CAS"/>
<dbReference type="PDBsum" id="6CFJ"/>
<dbReference type="PDBsum" id="6CFK"/>
<dbReference type="PDBsum" id="6CFL"/>
<dbReference type="PDBsum" id="6CZR"/>
<dbReference type="PDBsum" id="6DTI"/>
<dbReference type="PDBsum" id="6FKR"/>
<dbReference type="PDBsum" id="6GSJ"/>
<dbReference type="PDBsum" id="6GSK"/>
<dbReference type="PDBsum" id="6GSL"/>
<dbReference type="PDBsum" id="6GZQ"/>
<dbReference type="PDBsum" id="6GZX"/>
<dbReference type="PDBsum" id="6GZZ"/>
<dbReference type="PDBsum" id="6MKN"/>
<dbReference type="PDBsum" id="6MPF"/>
<dbReference type="PDBsum" id="6MPI"/>
<dbReference type="PDBsum" id="6N9E"/>
<dbReference type="PDBsum" id="6N9F"/>
<dbReference type="PDBsum" id="6ND5"/>
<dbReference type="PDBsum" id="6ND6"/>
<dbReference type="PDBsum" id="6NDK"/>
<dbReference type="PDBsum" id="6NSH"/>
<dbReference type="PDBsum" id="6NTA"/>
<dbReference type="PDBsum" id="6NUO"/>
<dbReference type="PDBsum" id="6NWY"/>
<dbReference type="PDBsum" id="6NY6"/>
<dbReference type="PDBsum" id="6O3M"/>
<dbReference type="PDBsum" id="6O97"/>
<dbReference type="PDBsum" id="6OF1"/>
<dbReference type="PDBsum" id="6OF6"/>
<dbReference type="PDBsum" id="6OJ2"/>
<dbReference type="PDBsum" id="6OPE"/>
<dbReference type="PDBsum" id="6ORD"/>
<dbReference type="PDBsum" id="6OSI"/>
<dbReference type="PDBsum" id="6OTR"/>
<dbReference type="PDBsum" id="6OXA"/>
<dbReference type="PDBsum" id="6OXI"/>
<dbReference type="PDBsum" id="6Q95"/>
<dbReference type="PDBsum" id="6QNQ"/>
<dbReference type="PDBsum" id="6QNR"/>
<dbReference type="PDBsum" id="6UCQ"/>
<dbReference type="PDBsum" id="6UO1"/>
<dbReference type="PDBsum" id="6XHV"/>
<dbReference type="PDBsum" id="6XHW"/>
<dbReference type="PDBsum" id="6XHX"/>
<dbReference type="PDBsum" id="6XHY"/>
<dbReference type="PDBsum" id="6XQD"/>
<dbReference type="PDBsum" id="6XQE"/>
<dbReference type="PDBsum" id="7AZO"/>
<dbReference type="PDBsum" id="7AZS"/>
<dbReference type="PDBsum" id="7DUG"/>
<dbReference type="PDBsum" id="7DUH"/>
<dbReference type="PDBsum" id="7DUI"/>
<dbReference type="PDBsum" id="7DUJ"/>
<dbReference type="PDBsum" id="7DUK"/>
<dbReference type="PDBsum" id="7DUL"/>
<dbReference type="PDBsum" id="7JQL"/>
<dbReference type="PDBsum" id="7JQM"/>
<dbReference type="PDBsum" id="7LH5"/>
<dbReference type="PDBsum" id="7MD7"/>
<dbReference type="PDBsum" id="7RQ8"/>
<dbReference type="PDBsum" id="7RQ9"/>
<dbReference type="PDBsum" id="7RQA"/>
<dbReference type="PDBsum" id="7RQB"/>
<dbReference type="PDBsum" id="7RQC"/>
<dbReference type="PDBsum" id="7RQD"/>
<dbReference type="PDBsum" id="7RQE"/>
<dbReference type="PDBsum" id="7U2H"/>
<dbReference type="PDBsum" id="7U2I"/>
<dbReference type="PDBsum" id="7U2J"/>
<dbReference type="PDBsum" id="7V2L"/>
<dbReference type="PDBsum" id="7V2M"/>
<dbReference type="PDBsum" id="7V2N"/>
<dbReference type="PDBsum" id="7V2O"/>
<dbReference type="PDBsum" id="7V2P"/>
<dbReference type="PDBsum" id="7V2Q"/>
<dbReference type="PDBsum" id="8CVJ"/>
<dbReference type="PDBsum" id="8CVK"/>
<dbReference type="PDBsum" id="8CVL"/>
<dbReference type="PDBsum" id="8EKB"/>
<dbReference type="PDBsum" id="8EV6"/>
<dbReference type="PDBsum" id="8EV7"/>
<dbReference type="PDBsum" id="8FC1"/>
<dbReference type="PDBsum" id="8FC2"/>
<dbReference type="PDBsum" id="8FC3"/>
<dbReference type="PDBsum" id="8FC4"/>
<dbReference type="PDBsum" id="8FC5"/>
<dbReference type="PDBsum" id="8FC6"/>
<dbReference type="PDBsum" id="8FOM"/>
<dbReference type="PDBsum" id="8FON"/>
<dbReference type="PDBsum" id="8G29"/>
<dbReference type="PDBsum" id="8G2A"/>
<dbReference type="PDBsum" id="8G2B"/>
<dbReference type="PDBsum" id="8G2C"/>
<dbReference type="PDBsum" id="8G2D"/>
<dbReference type="PDBsum" id="8T8B"/>
<dbReference type="PDBsum" id="8T8C"/>
<dbReference type="PDBsum" id="8UD6"/>
<dbReference type="PDBsum" id="8UD7"/>
<dbReference type="PDBsum" id="8UD8"/>
<dbReference type="PDBsum" id="8UVR"/>
<dbReference type="PDBsum" id="8UVS"/>
<dbReference type="PDBsum" id="8VTU"/>
<dbReference type="PDBsum" id="8VTV"/>
<dbReference type="PDBsum" id="8VTW"/>
<dbReference type="PDBsum" id="8VTX"/>
<dbReference type="PDBsum" id="8VTY"/>
<dbReference type="PDBsum" id="9B00"/>
<dbReference type="PDBsum" id="9D0J"/>
<dbReference type="PDBsum" id="9D7R"/>
<dbReference type="PDBsum" id="9D7S"/>
<dbReference type="PDBsum" id="9D7T"/>
<dbReference type="PDBsum" id="9DFC"/>
<dbReference type="PDBsum" id="9DFD"/>
<dbReference type="PDBsum" id="9DFE"/>
<dbReference type="EMDB" id="EMD-0101"/>
<dbReference type="EMDB" id="EMD-0104"/>
<dbReference type="EMDB" id="EMD-0105"/>
<dbReference type="EMDB" id="EMD-31655"/>
<dbReference type="EMDB" id="EMD-31656"/>
<dbReference type="EMDB" id="EMD-31657"/>
<dbReference type="EMDB" id="EMD-31658"/>
<dbReference type="EMDB" id="EMD-31659"/>
<dbReference type="EMDB" id="EMD-31660"/>
<dbReference type="EMDB" id="EMD-3852"/>
<dbReference type="EMDB" id="EMD-4073"/>
<dbReference type="EMDB" id="EMD-4074"/>
<dbReference type="EMDB" id="EMD-4075"/>
<dbReference type="EMDB" id="EMD-4076"/>
<dbReference type="EMDB" id="EMD-4077"/>
<dbReference type="EMDB" id="EMD-4078"/>
<dbReference type="EMDB" id="EMD-4079"/>
<dbReference type="EMDB" id="EMD-4080"/>
<dbReference type="EMDB" id="EMD-4083"/>
<dbReference type="EMDB" id="EMD-4475"/>
<dbReference type="EMDB" id="EMD-6934"/>
<dbReference type="EMDB" id="EMD-8596"/>
<dbReference type="EMDB" id="EMD-8597"/>
<dbReference type="SMR" id="P80376"/>
<dbReference type="IntAct" id="P80376">
    <property type="interactions" value="10"/>
</dbReference>
<dbReference type="DrugBank" id="DB08185">
    <property type="generic name" value="2-METHYLTHIO-N6-ISOPENTENYL-ADENOSINE-5'-MONOPHOSPHATE"/>
</dbReference>
<dbReference type="EnsemblBacteria" id="BAD71489">
    <property type="protein sequence ID" value="BAD71489"/>
    <property type="gene ID" value="BAD71489"/>
</dbReference>
<dbReference type="GeneID" id="3168024"/>
<dbReference type="KEGG" id="ttj:TTHA1666"/>
<dbReference type="PATRIC" id="fig|300852.9.peg.1636"/>
<dbReference type="eggNOG" id="COG0100">
    <property type="taxonomic scope" value="Bacteria"/>
</dbReference>
<dbReference type="HOGENOM" id="CLU_072439_5_0_0"/>
<dbReference type="PhylomeDB" id="P80376"/>
<dbReference type="EvolutionaryTrace" id="P80376"/>
<dbReference type="Proteomes" id="UP000000532">
    <property type="component" value="Chromosome"/>
</dbReference>
<dbReference type="GO" id="GO:1990904">
    <property type="term" value="C:ribonucleoprotein complex"/>
    <property type="evidence" value="ECO:0007669"/>
    <property type="project" value="UniProtKB-KW"/>
</dbReference>
<dbReference type="GO" id="GO:0005840">
    <property type="term" value="C:ribosome"/>
    <property type="evidence" value="ECO:0007669"/>
    <property type="project" value="UniProtKB-KW"/>
</dbReference>
<dbReference type="GO" id="GO:0019843">
    <property type="term" value="F:rRNA binding"/>
    <property type="evidence" value="ECO:0007669"/>
    <property type="project" value="UniProtKB-UniRule"/>
</dbReference>
<dbReference type="GO" id="GO:0003735">
    <property type="term" value="F:structural constituent of ribosome"/>
    <property type="evidence" value="ECO:0007669"/>
    <property type="project" value="InterPro"/>
</dbReference>
<dbReference type="GO" id="GO:0006412">
    <property type="term" value="P:translation"/>
    <property type="evidence" value="ECO:0007669"/>
    <property type="project" value="UniProtKB-UniRule"/>
</dbReference>
<dbReference type="FunFam" id="3.30.420.80:FF:000010">
    <property type="entry name" value="30S ribosomal protein S11"/>
    <property type="match status" value="1"/>
</dbReference>
<dbReference type="Gene3D" id="3.30.420.80">
    <property type="entry name" value="Ribosomal protein S11"/>
    <property type="match status" value="1"/>
</dbReference>
<dbReference type="HAMAP" id="MF_01310">
    <property type="entry name" value="Ribosomal_uS11"/>
    <property type="match status" value="1"/>
</dbReference>
<dbReference type="InterPro" id="IPR001971">
    <property type="entry name" value="Ribosomal_uS11"/>
</dbReference>
<dbReference type="InterPro" id="IPR019981">
    <property type="entry name" value="Ribosomal_uS11_bac-type"/>
</dbReference>
<dbReference type="InterPro" id="IPR018102">
    <property type="entry name" value="Ribosomal_uS11_CS"/>
</dbReference>
<dbReference type="InterPro" id="IPR036967">
    <property type="entry name" value="Ribosomal_uS11_sf"/>
</dbReference>
<dbReference type="NCBIfam" id="NF003698">
    <property type="entry name" value="PRK05309.1"/>
    <property type="match status" value="1"/>
</dbReference>
<dbReference type="NCBIfam" id="TIGR03632">
    <property type="entry name" value="uS11_bact"/>
    <property type="match status" value="1"/>
</dbReference>
<dbReference type="PANTHER" id="PTHR11759">
    <property type="entry name" value="40S RIBOSOMAL PROTEIN S14/30S RIBOSOMAL PROTEIN S11"/>
    <property type="match status" value="1"/>
</dbReference>
<dbReference type="Pfam" id="PF00411">
    <property type="entry name" value="Ribosomal_S11"/>
    <property type="match status" value="1"/>
</dbReference>
<dbReference type="PIRSF" id="PIRSF002131">
    <property type="entry name" value="Ribosomal_S11"/>
    <property type="match status" value="1"/>
</dbReference>
<dbReference type="SUPFAM" id="SSF53137">
    <property type="entry name" value="Translational machinery components"/>
    <property type="match status" value="1"/>
</dbReference>
<dbReference type="PROSITE" id="PS00054">
    <property type="entry name" value="RIBOSOMAL_S11"/>
    <property type="match status" value="1"/>
</dbReference>
<evidence type="ECO:0000256" key="1">
    <source>
        <dbReference type="SAM" id="MobiDB-lite"/>
    </source>
</evidence>
<evidence type="ECO:0000269" key="2">
    <source>
    </source>
</evidence>
<evidence type="ECO:0000269" key="3">
    <source>
    </source>
</evidence>
<evidence type="ECO:0000305" key="4"/>
<evidence type="ECO:0007829" key="5">
    <source>
        <dbReference type="PDB" id="1IBL"/>
    </source>
</evidence>
<evidence type="ECO:0007829" key="6">
    <source>
        <dbReference type="PDB" id="2UXB"/>
    </source>
</evidence>
<evidence type="ECO:0007829" key="7">
    <source>
        <dbReference type="PDB" id="2VQE"/>
    </source>
</evidence>
<evidence type="ECO:0007829" key="8">
    <source>
        <dbReference type="PDB" id="7V2L"/>
    </source>
</evidence>
<proteinExistence type="evidence at protein level"/>
<keyword id="KW-0002">3D-structure</keyword>
<keyword id="KW-0903">Direct protein sequencing</keyword>
<keyword id="KW-1185">Reference proteome</keyword>
<keyword id="KW-0687">Ribonucleoprotein</keyword>
<keyword id="KW-0689">Ribosomal protein</keyword>
<keyword id="KW-0694">RNA-binding</keyword>
<keyword id="KW-0699">rRNA-binding</keyword>
<accession>P80376</accession>
<accession>Q5SHR4</accession>
<accession>Q9RA66</accession>
<name>RS11_THET8</name>
<protein>
    <recommendedName>
        <fullName evidence="4">Small ribosomal subunit protein uS11</fullName>
    </recommendedName>
    <alternativeName>
        <fullName>30S ribosomal protein S11</fullName>
    </alternativeName>
</protein>
<gene>
    <name type="primary">rpsK</name>
    <name type="synonym">rps11</name>
    <name type="ordered locus">TTHA1666</name>
</gene>